<keyword id="KW-0002">3D-structure</keyword>
<keyword id="KW-0903">Direct protein sequencing</keyword>
<keyword id="KW-1185">Reference proteome</keyword>
<keyword id="KW-0678">Repressor</keyword>
<keyword id="KW-0687">Ribonucleoprotein</keyword>
<keyword id="KW-0689">Ribosomal protein</keyword>
<keyword id="KW-0694">RNA-binding</keyword>
<keyword id="KW-0699">rRNA-binding</keyword>
<keyword id="KW-0810">Translation regulation</keyword>
<comment type="function">
    <text evidence="1">One of the primary rRNA binding proteins, it binds directly to 16S rRNA central domain where it helps coordinate assembly of the platform of the 30S subunit.</text>
</comment>
<comment type="function">
    <text evidence="12">Protein S8 is a translational repressor protein, it controls the translation of the spc operon by binding to its mRNA.</text>
</comment>
<comment type="subunit">
    <text evidence="2 3 4 5 6 7 8 9 10 11">Part of the 30S ribosomal subunit (PubMed:10094780, PubMed:12244297, PubMed:12809609, PubMed:16272117, PubMed:27906160, PubMed:27906161, PubMed:27934701, PubMed:28077875, PubMed:365698). Contacts proteins S5 and S12 (By similarity).</text>
</comment>
<comment type="mass spectrometry"/>
<comment type="similarity">
    <text evidence="14">Belongs to the universal ribosomal protein uS8 family.</text>
</comment>
<evidence type="ECO:0000250" key="1"/>
<evidence type="ECO:0000250" key="2">
    <source>
        <dbReference type="UniProtKB" id="Q5SHQ2"/>
    </source>
</evidence>
<evidence type="ECO:0000269" key="3">
    <source>
    </source>
</evidence>
<evidence type="ECO:0000269" key="4">
    <source>
    </source>
</evidence>
<evidence type="ECO:0000269" key="5">
    <source>
    </source>
</evidence>
<evidence type="ECO:0000269" key="6">
    <source>
    </source>
</evidence>
<evidence type="ECO:0000269" key="7">
    <source>
    </source>
</evidence>
<evidence type="ECO:0000269" key="8">
    <source>
    </source>
</evidence>
<evidence type="ECO:0000269" key="9">
    <source>
    </source>
</evidence>
<evidence type="ECO:0000269" key="10">
    <source>
    </source>
</evidence>
<evidence type="ECO:0000269" key="11">
    <source>
    </source>
</evidence>
<evidence type="ECO:0000269" key="12">
    <source>
    </source>
</evidence>
<evidence type="ECO:0000303" key="13">
    <source>
    </source>
</evidence>
<evidence type="ECO:0000305" key="14"/>
<evidence type="ECO:0007829" key="15">
    <source>
        <dbReference type="PDB" id="7BOG"/>
    </source>
</evidence>
<evidence type="ECO:0007829" key="16">
    <source>
        <dbReference type="PDB" id="8CGJ"/>
    </source>
</evidence>
<feature type="initiator methionine" description="Removed" evidence="11">
    <location>
        <position position="1"/>
    </location>
</feature>
<feature type="chain" id="PRO_0000126405" description="Small ribosomal subunit protein uS8">
    <location>
        <begin position="2"/>
        <end position="130"/>
    </location>
</feature>
<feature type="sequence conflict" description="In Ref. 1; CAA25719." evidence="14" ref="1">
    <original>E</original>
    <variation>Q</variation>
    <location>
        <position position="91"/>
    </location>
</feature>
<feature type="helix" evidence="16">
    <location>
        <begin position="6"/>
        <end position="19"/>
    </location>
</feature>
<feature type="strand" evidence="16">
    <location>
        <begin position="23"/>
        <end position="28"/>
    </location>
</feature>
<feature type="helix" evidence="16">
    <location>
        <begin position="31"/>
        <end position="42"/>
    </location>
</feature>
<feature type="strand" evidence="16">
    <location>
        <begin position="45"/>
        <end position="52"/>
    </location>
</feature>
<feature type="strand" evidence="16">
    <location>
        <begin position="54"/>
        <end position="56"/>
    </location>
</feature>
<feature type="strand" evidence="16">
    <location>
        <begin position="58"/>
        <end position="63"/>
    </location>
</feature>
<feature type="strand" evidence="16">
    <location>
        <begin position="65"/>
        <end position="71"/>
    </location>
</feature>
<feature type="strand" evidence="16">
    <location>
        <begin position="74"/>
        <end position="77"/>
    </location>
</feature>
<feature type="strand" evidence="15">
    <location>
        <begin position="81"/>
        <end position="83"/>
    </location>
</feature>
<feature type="helix" evidence="16">
    <location>
        <begin position="89"/>
        <end position="91"/>
    </location>
</feature>
<feature type="helix" evidence="16">
    <location>
        <begin position="96"/>
        <end position="98"/>
    </location>
</feature>
<feature type="strand" evidence="16">
    <location>
        <begin position="100"/>
        <end position="106"/>
    </location>
</feature>
<feature type="strand" evidence="16">
    <location>
        <begin position="109"/>
        <end position="112"/>
    </location>
</feature>
<feature type="helix" evidence="16">
    <location>
        <begin position="113"/>
        <end position="119"/>
    </location>
</feature>
<feature type="strand" evidence="16">
    <location>
        <begin position="123"/>
        <end position="130"/>
    </location>
</feature>
<gene>
    <name type="primary">rpsH</name>
    <name type="ordered locus">b3306</name>
    <name type="ordered locus">JW3268</name>
</gene>
<name>RS8_ECOLI</name>
<reference key="1">
    <citation type="journal article" date="1983" name="Nucleic Acids Res.">
        <title>The spc ribosomal protein operon of Escherichia coli: sequence and cotranscription of the ribosomal protein genes and a protein export gene.</title>
        <authorList>
            <person name="Cerretti D.P."/>
            <person name="Dean D."/>
            <person name="Davis G.R."/>
            <person name="Bedwell D.M."/>
            <person name="Nomura M."/>
        </authorList>
    </citation>
    <scope>NUCLEOTIDE SEQUENCE [GENOMIC DNA]</scope>
    <source>
        <strain>K12</strain>
    </source>
</reference>
<reference key="2">
    <citation type="journal article" date="1997" name="Science">
        <title>The complete genome sequence of Escherichia coli K-12.</title>
        <authorList>
            <person name="Blattner F.R."/>
            <person name="Plunkett G. III"/>
            <person name="Bloch C.A."/>
            <person name="Perna N.T."/>
            <person name="Burland V."/>
            <person name="Riley M."/>
            <person name="Collado-Vides J."/>
            <person name="Glasner J.D."/>
            <person name="Rode C.K."/>
            <person name="Mayhew G.F."/>
            <person name="Gregor J."/>
            <person name="Davis N.W."/>
            <person name="Kirkpatrick H.A."/>
            <person name="Goeden M.A."/>
            <person name="Rose D.J."/>
            <person name="Mau B."/>
            <person name="Shao Y."/>
        </authorList>
    </citation>
    <scope>NUCLEOTIDE SEQUENCE [LARGE SCALE GENOMIC DNA]</scope>
    <source>
        <strain>K12 / MG1655 / ATCC 47076</strain>
    </source>
</reference>
<reference key="3">
    <citation type="journal article" date="2006" name="Mol. Syst. Biol.">
        <title>Highly accurate genome sequences of Escherichia coli K-12 strains MG1655 and W3110.</title>
        <authorList>
            <person name="Hayashi K."/>
            <person name="Morooka N."/>
            <person name="Yamamoto Y."/>
            <person name="Fujita K."/>
            <person name="Isono K."/>
            <person name="Choi S."/>
            <person name="Ohtsubo E."/>
            <person name="Baba T."/>
            <person name="Wanner B.L."/>
            <person name="Mori H."/>
            <person name="Horiuchi T."/>
        </authorList>
    </citation>
    <scope>NUCLEOTIDE SEQUENCE [LARGE SCALE GENOMIC DNA]</scope>
    <source>
        <strain>K12 / W3110 / ATCC 27325 / DSM 5911</strain>
    </source>
</reference>
<reference key="4">
    <citation type="journal article" date="1978" name="Hoppe-Seyler's Z. Physiol. Chem.">
        <title>The amino acid sequence of the ribosomal protein S8 of Escherichia coli.</title>
        <authorList>
            <person name="Allen G."/>
            <person name="Wittmann-Liebold B."/>
        </authorList>
    </citation>
    <scope>PROTEIN SEQUENCE OF 2-130</scope>
    <scope>SUBUNIT</scope>
    <source>
        <strain>K</strain>
    </source>
</reference>
<reference key="5">
    <citation type="journal article" date="1981" name="Nucleic Acids Res.">
        <title>Translational regulation by ribosomal protein S8 in Escherichia coli: structural homology between rRNA binding site and feedback target on mRNA.</title>
        <authorList>
            <person name="Olins P.O."/>
            <person name="Nomura M."/>
        </authorList>
    </citation>
    <scope>MECHANISM OF TRANSLATION REGULATION</scope>
</reference>
<reference key="6">
    <citation type="journal article" date="1992" name="J. Bacteriol.">
        <title>Mutagenesis of ribosomal protein S8 from Escherichia coli: defects in regulation of the spc operon.</title>
        <authorList>
            <person name="Wower I."/>
            <person name="Kowaleski M.P."/>
            <person name="Sears L.E."/>
            <person name="Zimmermann R.A."/>
        </authorList>
    </citation>
    <scope>MUTAGENESIS</scope>
</reference>
<reference key="7">
    <citation type="journal article" date="1997" name="Electrophoresis">
        <title>Escherichia coli proteome analysis using the gene-protein database.</title>
        <authorList>
            <person name="VanBogelen R.A."/>
            <person name="Abshire K.Z."/>
            <person name="Moldover B."/>
            <person name="Olson E.R."/>
            <person name="Neidhardt F.C."/>
        </authorList>
    </citation>
    <scope>IDENTIFICATION BY 2D-GEL</scope>
</reference>
<reference key="8">
    <citation type="journal article" date="1999" name="Anal. Biochem.">
        <title>Observation of Escherichia coli ribosomal proteins and their posttranslational modifications by mass spectrometry.</title>
        <authorList>
            <person name="Arnold R.J."/>
            <person name="Reilly J.P."/>
        </authorList>
    </citation>
    <scope>MASS SPECTROMETRY</scope>
    <scope>SUBUNIT</scope>
    <source>
        <strain>K12 / ATCC 25404 / DSM 5698 / NCIMB 11290</strain>
    </source>
</reference>
<reference key="9">
    <citation type="journal article" date="2014" name="Curr. Opin. Struct. Biol.">
        <title>A new system for naming ribosomal proteins.</title>
        <authorList>
            <person name="Ban N."/>
            <person name="Beckmann R."/>
            <person name="Cate J.H.D."/>
            <person name="Dinman J.D."/>
            <person name="Dragon F."/>
            <person name="Ellis S.R."/>
            <person name="Lafontaine D.L.J."/>
            <person name="Lindahl L."/>
            <person name="Liljas A."/>
            <person name="Lipton J.M."/>
            <person name="McAlear M.A."/>
            <person name="Moore P.B."/>
            <person name="Noller H.F."/>
            <person name="Ortega J."/>
            <person name="Panse V.G."/>
            <person name="Ramakrishnan V."/>
            <person name="Spahn C.M.T."/>
            <person name="Steitz T.A."/>
            <person name="Tchorzewski M."/>
            <person name="Tollervey D."/>
            <person name="Warren A.J."/>
            <person name="Williamson J.R."/>
            <person name="Wilson D."/>
            <person name="Yonath A."/>
            <person name="Yusupov M."/>
        </authorList>
    </citation>
    <scope>NOMENCLATURE</scope>
</reference>
<reference key="10">
    <citation type="journal article" date="2002" name="Nat. Struct. Biol.">
        <title>All-atom homology model of the Escherichia coli 30S ribosomal subunit.</title>
        <authorList>
            <person name="Tung C.-S."/>
            <person name="Joseph S."/>
            <person name="Sanbonmatsu K.Y."/>
        </authorList>
    </citation>
    <scope>3D-STRUCTURE MODELING</scope>
    <scope>SUBUNIT</scope>
</reference>
<reference key="11">
    <citation type="journal article" date="2003" name="Cell">
        <title>Study of the structural dynamics of the E. coli 70S ribosome using real-space refinement.</title>
        <authorList>
            <person name="Gao H."/>
            <person name="Sengupta J."/>
            <person name="Valle M."/>
            <person name="Korostelev A."/>
            <person name="Eswar N."/>
            <person name="Stagg S.M."/>
            <person name="Van Roey P."/>
            <person name="Agrawal R.K."/>
            <person name="Harvey S.C."/>
            <person name="Sali A."/>
            <person name="Chapman M.S."/>
            <person name="Frank J."/>
        </authorList>
    </citation>
    <scope>STRUCTURE BY ELECTRON MICROSCOPY (11.50 ANGSTROMS)</scope>
    <scope>SUBUNIT</scope>
    <source>
        <strain>MRE-600</strain>
    </source>
</reference>
<reference key="12">
    <citation type="journal article" date="2005" name="Science">
        <title>Structures of the bacterial ribosome at 3.5 A resolution.</title>
        <authorList>
            <person name="Schuwirth B.S."/>
            <person name="Borovinskaya M.A."/>
            <person name="Hau C.W."/>
            <person name="Zhang W."/>
            <person name="Vila-Sanjurjo A."/>
            <person name="Holton J.M."/>
            <person name="Cate J.H.D."/>
        </authorList>
    </citation>
    <scope>X-RAY CRYSTALLOGRAPHY (3.46 ANGSTROMS) OF 2 DIFFERENT RIBOSOME STRUCTURES</scope>
    <scope>SUBUNIT</scope>
    <source>
        <strain>MRE-600</strain>
    </source>
</reference>
<reference key="13">
    <citation type="journal article" date="2017" name="Nature">
        <title>Mechanistic insights into the alternative translation termination by ArfA and RF2.</title>
        <authorList>
            <person name="Ma C."/>
            <person name="Kurita D."/>
            <person name="Li N."/>
            <person name="Chen Y."/>
            <person name="Himeno H."/>
            <person name="Gao N."/>
        </authorList>
    </citation>
    <scope>STRUCTURE BY ELECTRON MICROSCOPY (3.0 ANGSTROMS) OF 70S RIBOSOME IN COMPLEX WITH ARFA AND RF2</scope>
    <scope>SUBUNIT</scope>
</reference>
<reference key="14">
    <citation type="journal article" date="2017" name="Nature">
        <title>Structural basis for ArfA-RF2-mediated translation termination on mRNAs lacking stop codons.</title>
        <authorList>
            <person name="Huter P."/>
            <person name="Mueller C."/>
            <person name="Beckert B."/>
            <person name="Arenz S."/>
            <person name="Berninghausen O."/>
            <person name="Beckmann R."/>
            <person name="Wilson D.N."/>
        </authorList>
    </citation>
    <scope>STRUCTURE BY ELECTRON MICROSCOPY (3.1 ANGSTROMS) OF 70S RIBOSOME IN COMPLEX WITH ARFA AND RF2</scope>
    <scope>SUBUNIT</scope>
</reference>
<reference key="15">
    <citation type="journal article" date="2016" name="Science">
        <title>Translational termination without a stop codon.</title>
        <authorList>
            <person name="James N.R."/>
            <person name="Brown A."/>
            <person name="Gordiyenko Y."/>
            <person name="Ramakrishnan V."/>
        </authorList>
    </citation>
    <scope>STRUCTURE BY ELECTRON MICROSCOPY (2.97 ANGSTROMS) OF 70S RIBOSOME IN COMPLEX WITH ARFA AND RF2</scope>
    <scope>SUBUNIT</scope>
</reference>
<reference key="16">
    <citation type="journal article" date="2017" name="Nature">
        <title>Structural basis of co-translational quality control by ArfA and RF2 bound to ribosome.</title>
        <authorList>
            <person name="Zeng F."/>
            <person name="Chen Y."/>
            <person name="Remis J."/>
            <person name="Shekhar M."/>
            <person name="Phillips J.C."/>
            <person name="Tajkhorshid E."/>
            <person name="Jin H."/>
        </authorList>
    </citation>
    <scope>STRUCTURE BY ELECTRON MICROSCOPY (3.52 ANGSTROMS) OF 70S RIBOSOME IN COMPLEX WITH ARFA AND RF2</scope>
    <scope>SUBUNIT</scope>
</reference>
<sequence>MSMQDPIADMLTRIRNGQAANKAAVTMPSSKLKVAIANVLKEEGFIEDFKVEGDTKPELELTLKYFQGKAVVESIQRVSRPGLRIYKRKDELPKVMAGLGIAVVSTSKGVMTDRAARQAGLGGEIICYVA</sequence>
<accession>P0A7W7</accession>
<accession>P02361</accession>
<accession>Q2M6X1</accession>
<dbReference type="EMBL" id="X01563">
    <property type="protein sequence ID" value="CAA25719.1"/>
    <property type="molecule type" value="Genomic_DNA"/>
</dbReference>
<dbReference type="EMBL" id="U18997">
    <property type="protein sequence ID" value="AAA58103.1"/>
    <property type="molecule type" value="Genomic_DNA"/>
</dbReference>
<dbReference type="EMBL" id="U00096">
    <property type="protein sequence ID" value="AAC76331.1"/>
    <property type="molecule type" value="Genomic_DNA"/>
</dbReference>
<dbReference type="EMBL" id="AP009048">
    <property type="protein sequence ID" value="BAE77985.1"/>
    <property type="molecule type" value="Genomic_DNA"/>
</dbReference>
<dbReference type="PIR" id="E65123">
    <property type="entry name" value="R3EC8"/>
</dbReference>
<dbReference type="RefSeq" id="NP_417765.1">
    <property type="nucleotide sequence ID" value="NC_000913.3"/>
</dbReference>
<dbReference type="RefSeq" id="WP_000062611.1">
    <property type="nucleotide sequence ID" value="NZ_STEB01000038.1"/>
</dbReference>
<dbReference type="PDB" id="1EG0">
    <property type="method" value="EM"/>
    <property type="resolution" value="11.50 A"/>
    <property type="chains" value="E=1-130"/>
</dbReference>
<dbReference type="PDB" id="1S03">
    <property type="method" value="X-ray"/>
    <property type="resolution" value="2.70 A"/>
    <property type="chains" value="G/H=2-130"/>
</dbReference>
<dbReference type="PDB" id="2YKR">
    <property type="method" value="EM"/>
    <property type="resolution" value="9.80 A"/>
    <property type="chains" value="H=2-130"/>
</dbReference>
<dbReference type="PDB" id="3IY8">
    <property type="method" value="EM"/>
    <property type="resolution" value="14.10 A"/>
    <property type="chains" value="H=2-130"/>
</dbReference>
<dbReference type="PDB" id="3J9Y">
    <property type="method" value="EM"/>
    <property type="resolution" value="3.90 A"/>
    <property type="chains" value="h=1-130"/>
</dbReference>
<dbReference type="PDB" id="3J9Z">
    <property type="method" value="EM"/>
    <property type="resolution" value="3.60 A"/>
    <property type="chains" value="SH=2-130"/>
</dbReference>
<dbReference type="PDB" id="3JA1">
    <property type="method" value="EM"/>
    <property type="resolution" value="3.60 A"/>
    <property type="chains" value="SH=2-130"/>
</dbReference>
<dbReference type="PDB" id="3JBU">
    <property type="method" value="EM"/>
    <property type="resolution" value="3.64 A"/>
    <property type="chains" value="H=1-130"/>
</dbReference>
<dbReference type="PDB" id="3JBV">
    <property type="method" value="EM"/>
    <property type="resolution" value="3.32 A"/>
    <property type="chains" value="H=1-130"/>
</dbReference>
<dbReference type="PDB" id="3JCD">
    <property type="method" value="EM"/>
    <property type="resolution" value="3.70 A"/>
    <property type="chains" value="h=1-130"/>
</dbReference>
<dbReference type="PDB" id="3JCE">
    <property type="method" value="EM"/>
    <property type="resolution" value="3.20 A"/>
    <property type="chains" value="h=1-130"/>
</dbReference>
<dbReference type="PDB" id="3JCJ">
    <property type="method" value="EM"/>
    <property type="resolution" value="3.70 A"/>
    <property type="chains" value="p=1-130"/>
</dbReference>
<dbReference type="PDB" id="3JCN">
    <property type="method" value="EM"/>
    <property type="resolution" value="4.60 A"/>
    <property type="chains" value="k=1-130"/>
</dbReference>
<dbReference type="PDB" id="4A2I">
    <property type="method" value="EM"/>
    <property type="resolution" value="16.50 A"/>
    <property type="chains" value="H=2-130"/>
</dbReference>
<dbReference type="PDB" id="4ADV">
    <property type="method" value="EM"/>
    <property type="resolution" value="13.50 A"/>
    <property type="chains" value="H=2-130"/>
</dbReference>
<dbReference type="PDB" id="4U1U">
    <property type="method" value="X-ray"/>
    <property type="resolution" value="2.95 A"/>
    <property type="chains" value="AH/CH=2-130"/>
</dbReference>
<dbReference type="PDB" id="4U1V">
    <property type="method" value="X-ray"/>
    <property type="resolution" value="3.00 A"/>
    <property type="chains" value="AH/CH=2-130"/>
</dbReference>
<dbReference type="PDB" id="4U20">
    <property type="method" value="X-ray"/>
    <property type="resolution" value="2.90 A"/>
    <property type="chains" value="AH/CH=2-130"/>
</dbReference>
<dbReference type="PDB" id="4U24">
    <property type="method" value="X-ray"/>
    <property type="resolution" value="2.90 A"/>
    <property type="chains" value="AH/CH=2-130"/>
</dbReference>
<dbReference type="PDB" id="4U25">
    <property type="method" value="X-ray"/>
    <property type="resolution" value="2.90 A"/>
    <property type="chains" value="AH/CH=2-130"/>
</dbReference>
<dbReference type="PDB" id="4U26">
    <property type="method" value="X-ray"/>
    <property type="resolution" value="2.80 A"/>
    <property type="chains" value="AH/CH=2-130"/>
</dbReference>
<dbReference type="PDB" id="4U27">
    <property type="method" value="X-ray"/>
    <property type="resolution" value="2.80 A"/>
    <property type="chains" value="AH/CH=2-130"/>
</dbReference>
<dbReference type="PDB" id="4V47">
    <property type="method" value="EM"/>
    <property type="resolution" value="12.30 A"/>
    <property type="chains" value="BH=2-130"/>
</dbReference>
<dbReference type="PDB" id="4V48">
    <property type="method" value="EM"/>
    <property type="resolution" value="11.50 A"/>
    <property type="chains" value="BH=2-130"/>
</dbReference>
<dbReference type="PDB" id="4V4H">
    <property type="method" value="X-ray"/>
    <property type="resolution" value="3.46 A"/>
    <property type="chains" value="AH/CH=1-130"/>
</dbReference>
<dbReference type="PDB" id="4V4Q">
    <property type="method" value="X-ray"/>
    <property type="resolution" value="3.46 A"/>
    <property type="chains" value="AH/CH=2-130"/>
</dbReference>
<dbReference type="PDB" id="4V4V">
    <property type="method" value="EM"/>
    <property type="resolution" value="15.00 A"/>
    <property type="chains" value="AH=3-129"/>
</dbReference>
<dbReference type="PDB" id="4V4W">
    <property type="method" value="EM"/>
    <property type="resolution" value="15.00 A"/>
    <property type="chains" value="AH=3-129"/>
</dbReference>
<dbReference type="PDB" id="4V50">
    <property type="method" value="X-ray"/>
    <property type="resolution" value="3.22 A"/>
    <property type="chains" value="AH/CH=2-130"/>
</dbReference>
<dbReference type="PDB" id="4V52">
    <property type="method" value="X-ray"/>
    <property type="resolution" value="3.21 A"/>
    <property type="chains" value="AH/CH=2-130"/>
</dbReference>
<dbReference type="PDB" id="4V53">
    <property type="method" value="X-ray"/>
    <property type="resolution" value="3.54 A"/>
    <property type="chains" value="AH/CH=2-130"/>
</dbReference>
<dbReference type="PDB" id="4V54">
    <property type="method" value="X-ray"/>
    <property type="resolution" value="3.30 A"/>
    <property type="chains" value="AH/CH=2-130"/>
</dbReference>
<dbReference type="PDB" id="4V55">
    <property type="method" value="X-ray"/>
    <property type="resolution" value="4.00 A"/>
    <property type="chains" value="AH/CH=2-130"/>
</dbReference>
<dbReference type="PDB" id="4V56">
    <property type="method" value="X-ray"/>
    <property type="resolution" value="3.93 A"/>
    <property type="chains" value="AH/CH=2-130"/>
</dbReference>
<dbReference type="PDB" id="4V57">
    <property type="method" value="X-ray"/>
    <property type="resolution" value="3.50 A"/>
    <property type="chains" value="AH/CH=2-130"/>
</dbReference>
<dbReference type="PDB" id="4V5B">
    <property type="method" value="X-ray"/>
    <property type="resolution" value="3.74 A"/>
    <property type="chains" value="BH/DH=2-130"/>
</dbReference>
<dbReference type="PDB" id="4V5H">
    <property type="method" value="EM"/>
    <property type="resolution" value="5.80 A"/>
    <property type="chains" value="AH=2-130"/>
</dbReference>
<dbReference type="PDB" id="4V5Y">
    <property type="method" value="X-ray"/>
    <property type="resolution" value="4.45 A"/>
    <property type="chains" value="AH/CH=2-130"/>
</dbReference>
<dbReference type="PDB" id="4V64">
    <property type="method" value="X-ray"/>
    <property type="resolution" value="3.50 A"/>
    <property type="chains" value="AH/CH=2-130"/>
</dbReference>
<dbReference type="PDB" id="4V65">
    <property type="method" value="EM"/>
    <property type="resolution" value="9.00 A"/>
    <property type="chains" value="AV=1-130"/>
</dbReference>
<dbReference type="PDB" id="4V66">
    <property type="method" value="EM"/>
    <property type="resolution" value="9.00 A"/>
    <property type="chains" value="AV=1-130"/>
</dbReference>
<dbReference type="PDB" id="4V69">
    <property type="method" value="EM"/>
    <property type="resolution" value="6.70 A"/>
    <property type="chains" value="AH=2-130"/>
</dbReference>
<dbReference type="PDB" id="4V6C">
    <property type="method" value="X-ray"/>
    <property type="resolution" value="3.19 A"/>
    <property type="chains" value="AH/CH=1-130"/>
</dbReference>
<dbReference type="PDB" id="4V6D">
    <property type="method" value="X-ray"/>
    <property type="resolution" value="3.81 A"/>
    <property type="chains" value="AH/CH=1-130"/>
</dbReference>
<dbReference type="PDB" id="4V6E">
    <property type="method" value="X-ray"/>
    <property type="resolution" value="3.71 A"/>
    <property type="chains" value="AH/CH=1-130"/>
</dbReference>
<dbReference type="PDB" id="4V6K">
    <property type="method" value="EM"/>
    <property type="resolution" value="8.25 A"/>
    <property type="chains" value="BL=1-130"/>
</dbReference>
<dbReference type="PDB" id="4V6L">
    <property type="method" value="EM"/>
    <property type="resolution" value="13.20 A"/>
    <property type="chains" value="AL=1-130"/>
</dbReference>
<dbReference type="PDB" id="4V6M">
    <property type="method" value="EM"/>
    <property type="resolution" value="7.10 A"/>
    <property type="chains" value="AH=2-130"/>
</dbReference>
<dbReference type="PDB" id="4V6N">
    <property type="method" value="EM"/>
    <property type="resolution" value="12.10 A"/>
    <property type="chains" value="BK=2-130"/>
</dbReference>
<dbReference type="PDB" id="4V6O">
    <property type="method" value="EM"/>
    <property type="resolution" value="14.70 A"/>
    <property type="chains" value="AK=2-130"/>
</dbReference>
<dbReference type="PDB" id="4V6P">
    <property type="method" value="EM"/>
    <property type="resolution" value="13.50 A"/>
    <property type="chains" value="AK=2-130"/>
</dbReference>
<dbReference type="PDB" id="4V6Q">
    <property type="method" value="EM"/>
    <property type="resolution" value="11.50 A"/>
    <property type="chains" value="AK=2-130"/>
</dbReference>
<dbReference type="PDB" id="4V6R">
    <property type="method" value="EM"/>
    <property type="resolution" value="11.50 A"/>
    <property type="chains" value="AK=2-130"/>
</dbReference>
<dbReference type="PDB" id="4V6S">
    <property type="method" value="EM"/>
    <property type="resolution" value="13.10 A"/>
    <property type="chains" value="BJ=2-130"/>
</dbReference>
<dbReference type="PDB" id="4V6T">
    <property type="method" value="EM"/>
    <property type="resolution" value="8.30 A"/>
    <property type="chains" value="AH=2-130"/>
</dbReference>
<dbReference type="PDB" id="4V6V">
    <property type="method" value="EM"/>
    <property type="resolution" value="9.80 A"/>
    <property type="chains" value="AH=2-130"/>
</dbReference>
<dbReference type="PDB" id="4V6Y">
    <property type="method" value="EM"/>
    <property type="resolution" value="12.00 A"/>
    <property type="chains" value="AH=1-130"/>
</dbReference>
<dbReference type="PDB" id="4V6Z">
    <property type="method" value="EM"/>
    <property type="resolution" value="12.00 A"/>
    <property type="chains" value="AH=1-130"/>
</dbReference>
<dbReference type="PDB" id="4V70">
    <property type="method" value="EM"/>
    <property type="resolution" value="17.00 A"/>
    <property type="chains" value="AH=1-130"/>
</dbReference>
<dbReference type="PDB" id="4V71">
    <property type="method" value="EM"/>
    <property type="resolution" value="20.00 A"/>
    <property type="chains" value="AH=1-130"/>
</dbReference>
<dbReference type="PDB" id="4V72">
    <property type="method" value="EM"/>
    <property type="resolution" value="13.00 A"/>
    <property type="chains" value="AH=1-130"/>
</dbReference>
<dbReference type="PDB" id="4V73">
    <property type="method" value="EM"/>
    <property type="resolution" value="15.00 A"/>
    <property type="chains" value="AH=1-130"/>
</dbReference>
<dbReference type="PDB" id="4V74">
    <property type="method" value="EM"/>
    <property type="resolution" value="17.00 A"/>
    <property type="chains" value="AH=1-130"/>
</dbReference>
<dbReference type="PDB" id="4V75">
    <property type="method" value="EM"/>
    <property type="resolution" value="12.00 A"/>
    <property type="chains" value="AH=1-130"/>
</dbReference>
<dbReference type="PDB" id="4V76">
    <property type="method" value="EM"/>
    <property type="resolution" value="17.00 A"/>
    <property type="chains" value="AH=1-130"/>
</dbReference>
<dbReference type="PDB" id="4V77">
    <property type="method" value="EM"/>
    <property type="resolution" value="17.00 A"/>
    <property type="chains" value="AH=1-130"/>
</dbReference>
<dbReference type="PDB" id="4V78">
    <property type="method" value="EM"/>
    <property type="resolution" value="20.00 A"/>
    <property type="chains" value="AH=1-130"/>
</dbReference>
<dbReference type="PDB" id="4V79">
    <property type="method" value="EM"/>
    <property type="resolution" value="15.00 A"/>
    <property type="chains" value="AH=1-130"/>
</dbReference>
<dbReference type="PDB" id="4V7A">
    <property type="method" value="EM"/>
    <property type="resolution" value="9.00 A"/>
    <property type="chains" value="AH=1-130"/>
</dbReference>
<dbReference type="PDB" id="4V7B">
    <property type="method" value="EM"/>
    <property type="resolution" value="6.80 A"/>
    <property type="chains" value="AH=1-130"/>
</dbReference>
<dbReference type="PDB" id="4V7C">
    <property type="method" value="EM"/>
    <property type="resolution" value="7.60 A"/>
    <property type="chains" value="AH=2-130"/>
</dbReference>
<dbReference type="PDB" id="4V7D">
    <property type="method" value="EM"/>
    <property type="resolution" value="7.60 A"/>
    <property type="chains" value="BH=2-130"/>
</dbReference>
<dbReference type="PDB" id="4V7I">
    <property type="method" value="EM"/>
    <property type="resolution" value="9.60 A"/>
    <property type="chains" value="BH=1-130"/>
</dbReference>
<dbReference type="PDB" id="4V7S">
    <property type="method" value="X-ray"/>
    <property type="resolution" value="3.25 A"/>
    <property type="chains" value="AH/CH=2-130"/>
</dbReference>
<dbReference type="PDB" id="4V7T">
    <property type="method" value="X-ray"/>
    <property type="resolution" value="3.19 A"/>
    <property type="chains" value="AH/CH=2-130"/>
</dbReference>
<dbReference type="PDB" id="4V7U">
    <property type="method" value="X-ray"/>
    <property type="resolution" value="3.10 A"/>
    <property type="chains" value="AH/CH=2-130"/>
</dbReference>
<dbReference type="PDB" id="4V7V">
    <property type="method" value="X-ray"/>
    <property type="resolution" value="3.29 A"/>
    <property type="chains" value="AH/CH=2-130"/>
</dbReference>
<dbReference type="PDB" id="4V85">
    <property type="method" value="X-ray"/>
    <property type="resolution" value="3.20 A"/>
    <property type="chains" value="AH=1-130"/>
</dbReference>
<dbReference type="PDB" id="4V89">
    <property type="method" value="X-ray"/>
    <property type="resolution" value="3.70 A"/>
    <property type="chains" value="AH=1-130"/>
</dbReference>
<dbReference type="PDB" id="4V9C">
    <property type="method" value="X-ray"/>
    <property type="resolution" value="3.30 A"/>
    <property type="chains" value="AH/CH=1-130"/>
</dbReference>
<dbReference type="PDB" id="4V9D">
    <property type="method" value="X-ray"/>
    <property type="resolution" value="3.00 A"/>
    <property type="chains" value="AH/BH=2-130"/>
</dbReference>
<dbReference type="PDB" id="4V9O">
    <property type="method" value="X-ray"/>
    <property type="resolution" value="2.90 A"/>
    <property type="chains" value="BH/DH/FH/HH=1-130"/>
</dbReference>
<dbReference type="PDB" id="4V9P">
    <property type="method" value="X-ray"/>
    <property type="resolution" value="2.90 A"/>
    <property type="chains" value="BH/DH/FH/HH=1-130"/>
</dbReference>
<dbReference type="PDB" id="4WF1">
    <property type="method" value="X-ray"/>
    <property type="resolution" value="3.09 A"/>
    <property type="chains" value="AH/CH=2-130"/>
</dbReference>
<dbReference type="PDB" id="4WOI">
    <property type="method" value="X-ray"/>
    <property type="resolution" value="3.00 A"/>
    <property type="chains" value="AH/DH=1-130"/>
</dbReference>
<dbReference type="PDB" id="4WWW">
    <property type="method" value="X-ray"/>
    <property type="resolution" value="3.10 A"/>
    <property type="chains" value="QH/XH=2-130"/>
</dbReference>
<dbReference type="PDB" id="4YBB">
    <property type="method" value="X-ray"/>
    <property type="resolution" value="2.10 A"/>
    <property type="chains" value="AH/BH=2-130"/>
</dbReference>
<dbReference type="PDB" id="5AFI">
    <property type="method" value="EM"/>
    <property type="resolution" value="2.90 A"/>
    <property type="chains" value="h=1-130"/>
</dbReference>
<dbReference type="PDB" id="5H5U">
    <property type="method" value="EM"/>
    <property type="resolution" value="3.00 A"/>
    <property type="chains" value="o=2-130"/>
</dbReference>
<dbReference type="PDB" id="5IQR">
    <property type="method" value="EM"/>
    <property type="resolution" value="3.00 A"/>
    <property type="chains" value="m=1-130"/>
</dbReference>
<dbReference type="PDB" id="5IT8">
    <property type="method" value="X-ray"/>
    <property type="resolution" value="3.12 A"/>
    <property type="chains" value="AH/BH=2-130"/>
</dbReference>
<dbReference type="PDB" id="5J5B">
    <property type="method" value="X-ray"/>
    <property type="resolution" value="2.80 A"/>
    <property type="chains" value="AH/BH=2-130"/>
</dbReference>
<dbReference type="PDB" id="5J7L">
    <property type="method" value="X-ray"/>
    <property type="resolution" value="3.00 A"/>
    <property type="chains" value="AH/BH=2-130"/>
</dbReference>
<dbReference type="PDB" id="5J88">
    <property type="method" value="X-ray"/>
    <property type="resolution" value="3.32 A"/>
    <property type="chains" value="AH/BH=2-130"/>
</dbReference>
<dbReference type="PDB" id="5J8A">
    <property type="method" value="X-ray"/>
    <property type="resolution" value="3.10 A"/>
    <property type="chains" value="AH/BH=2-130"/>
</dbReference>
<dbReference type="PDB" id="5J91">
    <property type="method" value="X-ray"/>
    <property type="resolution" value="2.96 A"/>
    <property type="chains" value="AH/BH=2-130"/>
</dbReference>
<dbReference type="PDB" id="5JC9">
    <property type="method" value="X-ray"/>
    <property type="resolution" value="3.03 A"/>
    <property type="chains" value="AH/BH=2-130"/>
</dbReference>
<dbReference type="PDB" id="5JTE">
    <property type="method" value="EM"/>
    <property type="resolution" value="3.60 A"/>
    <property type="chains" value="AH=1-130"/>
</dbReference>
<dbReference type="PDB" id="5JU8">
    <property type="method" value="EM"/>
    <property type="resolution" value="3.60 A"/>
    <property type="chains" value="AH=1-130"/>
</dbReference>
<dbReference type="PDB" id="5KCR">
    <property type="method" value="EM"/>
    <property type="resolution" value="3.60 A"/>
    <property type="chains" value="1h=1-130"/>
</dbReference>
<dbReference type="PDB" id="5KCS">
    <property type="method" value="EM"/>
    <property type="resolution" value="3.90 A"/>
    <property type="chains" value="1h=1-130"/>
</dbReference>
<dbReference type="PDB" id="5KPS">
    <property type="method" value="EM"/>
    <property type="resolution" value="3.90 A"/>
    <property type="chains" value="13=1-130"/>
</dbReference>
<dbReference type="PDB" id="5KPV">
    <property type="method" value="EM"/>
    <property type="resolution" value="4.10 A"/>
    <property type="chains" value="12=1-130"/>
</dbReference>
<dbReference type="PDB" id="5KPW">
    <property type="method" value="EM"/>
    <property type="resolution" value="3.90 A"/>
    <property type="chains" value="12=1-130"/>
</dbReference>
<dbReference type="PDB" id="5KPX">
    <property type="method" value="EM"/>
    <property type="resolution" value="3.90 A"/>
    <property type="chains" value="12=1-130"/>
</dbReference>
<dbReference type="PDB" id="5L3P">
    <property type="method" value="EM"/>
    <property type="resolution" value="3.70 A"/>
    <property type="chains" value="h=1-130"/>
</dbReference>
<dbReference type="PDB" id="5LZA">
    <property type="method" value="EM"/>
    <property type="resolution" value="3.60 A"/>
    <property type="chains" value="h=2-130"/>
</dbReference>
<dbReference type="PDB" id="5LZB">
    <property type="method" value="EM"/>
    <property type="resolution" value="5.30 A"/>
    <property type="chains" value="h=2-130"/>
</dbReference>
<dbReference type="PDB" id="5LZC">
    <property type="method" value="EM"/>
    <property type="resolution" value="4.80 A"/>
    <property type="chains" value="h=2-130"/>
</dbReference>
<dbReference type="PDB" id="5LZD">
    <property type="method" value="EM"/>
    <property type="resolution" value="3.40 A"/>
    <property type="chains" value="h=2-130"/>
</dbReference>
<dbReference type="PDB" id="5LZE">
    <property type="method" value="EM"/>
    <property type="resolution" value="3.50 A"/>
    <property type="chains" value="h=2-130"/>
</dbReference>
<dbReference type="PDB" id="5LZF">
    <property type="method" value="EM"/>
    <property type="resolution" value="4.60 A"/>
    <property type="chains" value="h=2-130"/>
</dbReference>
<dbReference type="PDB" id="5MDV">
    <property type="method" value="EM"/>
    <property type="resolution" value="2.97 A"/>
    <property type="chains" value="m=1-130"/>
</dbReference>
<dbReference type="PDB" id="5MDW">
    <property type="method" value="EM"/>
    <property type="resolution" value="3.06 A"/>
    <property type="chains" value="m=1-130"/>
</dbReference>
<dbReference type="PDB" id="5MDY">
    <property type="method" value="EM"/>
    <property type="resolution" value="3.35 A"/>
    <property type="chains" value="m=1-130"/>
</dbReference>
<dbReference type="PDB" id="5MDZ">
    <property type="method" value="EM"/>
    <property type="resolution" value="3.10 A"/>
    <property type="chains" value="m=1-130"/>
</dbReference>
<dbReference type="PDB" id="5ME0">
    <property type="method" value="EM"/>
    <property type="resolution" value="13.50 A"/>
    <property type="chains" value="H=1-130"/>
</dbReference>
<dbReference type="PDB" id="5ME1">
    <property type="method" value="EM"/>
    <property type="resolution" value="13.50 A"/>
    <property type="chains" value="H=1-130"/>
</dbReference>
<dbReference type="PDB" id="5MGP">
    <property type="method" value="EM"/>
    <property type="resolution" value="3.10 A"/>
    <property type="chains" value="h=2-130"/>
</dbReference>
<dbReference type="PDB" id="5MY1">
    <property type="method" value="EM"/>
    <property type="resolution" value="7.60 A"/>
    <property type="chains" value="H=2-130"/>
</dbReference>
<dbReference type="PDB" id="5NO2">
    <property type="method" value="EM"/>
    <property type="resolution" value="5.16 A"/>
    <property type="chains" value="H=2-130"/>
</dbReference>
<dbReference type="PDB" id="5NO3">
    <property type="method" value="EM"/>
    <property type="resolution" value="5.16 A"/>
    <property type="chains" value="H=2-130"/>
</dbReference>
<dbReference type="PDB" id="5NO4">
    <property type="method" value="EM"/>
    <property type="resolution" value="5.16 A"/>
    <property type="chains" value="H=2-130"/>
</dbReference>
<dbReference type="PDB" id="5NP6">
    <property type="method" value="EM"/>
    <property type="resolution" value="3.60 A"/>
    <property type="chains" value="K=2-130"/>
</dbReference>
<dbReference type="PDB" id="5NWY">
    <property type="method" value="EM"/>
    <property type="resolution" value="2.93 A"/>
    <property type="chains" value="7=1-130"/>
</dbReference>
<dbReference type="PDB" id="5O2R">
    <property type="method" value="EM"/>
    <property type="resolution" value="3.40 A"/>
    <property type="chains" value="h=2-130"/>
</dbReference>
<dbReference type="PDB" id="5U4I">
    <property type="method" value="EM"/>
    <property type="resolution" value="3.50 A"/>
    <property type="chains" value="h=2-130"/>
</dbReference>
<dbReference type="PDB" id="5U9F">
    <property type="method" value="EM"/>
    <property type="resolution" value="3.20 A"/>
    <property type="chains" value="H=1-130"/>
</dbReference>
<dbReference type="PDB" id="5U9G">
    <property type="method" value="EM"/>
    <property type="resolution" value="3.20 A"/>
    <property type="chains" value="H=1-130"/>
</dbReference>
<dbReference type="PDB" id="5UYK">
    <property type="method" value="EM"/>
    <property type="resolution" value="3.90 A"/>
    <property type="chains" value="H=2-130"/>
</dbReference>
<dbReference type="PDB" id="5UYL">
    <property type="method" value="EM"/>
    <property type="resolution" value="3.60 A"/>
    <property type="chains" value="H=2-130"/>
</dbReference>
<dbReference type="PDB" id="5UYM">
    <property type="method" value="EM"/>
    <property type="resolution" value="3.20 A"/>
    <property type="chains" value="H=2-130"/>
</dbReference>
<dbReference type="PDB" id="5UYN">
    <property type="method" value="EM"/>
    <property type="resolution" value="4.00 A"/>
    <property type="chains" value="H=2-130"/>
</dbReference>
<dbReference type="PDB" id="5UYP">
    <property type="method" value="EM"/>
    <property type="resolution" value="3.90 A"/>
    <property type="chains" value="H=2-130"/>
</dbReference>
<dbReference type="PDB" id="5UYQ">
    <property type="method" value="EM"/>
    <property type="resolution" value="3.80 A"/>
    <property type="chains" value="H=2-130"/>
</dbReference>
<dbReference type="PDB" id="5UZ4">
    <property type="method" value="EM"/>
    <property type="resolution" value="5.80 A"/>
    <property type="chains" value="H=1-130"/>
</dbReference>
<dbReference type="PDB" id="5WDT">
    <property type="method" value="EM"/>
    <property type="resolution" value="3.00 A"/>
    <property type="chains" value="h=2-130"/>
</dbReference>
<dbReference type="PDB" id="5WE4">
    <property type="method" value="EM"/>
    <property type="resolution" value="3.10 A"/>
    <property type="chains" value="h=2-130"/>
</dbReference>
<dbReference type="PDB" id="5WE6">
    <property type="method" value="EM"/>
    <property type="resolution" value="3.40 A"/>
    <property type="chains" value="h=2-130"/>
</dbReference>
<dbReference type="PDB" id="5WF0">
    <property type="method" value="EM"/>
    <property type="resolution" value="3.60 A"/>
    <property type="chains" value="h=2-130"/>
</dbReference>
<dbReference type="PDB" id="5WFK">
    <property type="method" value="EM"/>
    <property type="resolution" value="3.40 A"/>
    <property type="chains" value="h=2-130"/>
</dbReference>
<dbReference type="PDB" id="5WFS">
    <property type="method" value="EM"/>
    <property type="resolution" value="3.00 A"/>
    <property type="chains" value="h=2-130"/>
</dbReference>
<dbReference type="PDB" id="6AWB">
    <property type="method" value="EM"/>
    <property type="resolution" value="6.70 A"/>
    <property type="chains" value="K=2-130"/>
</dbReference>
<dbReference type="PDB" id="6AWC">
    <property type="method" value="EM"/>
    <property type="resolution" value="7.90 A"/>
    <property type="chains" value="K=2-130"/>
</dbReference>
<dbReference type="PDB" id="6AWD">
    <property type="method" value="EM"/>
    <property type="resolution" value="8.10 A"/>
    <property type="chains" value="K=2-130"/>
</dbReference>
<dbReference type="PDB" id="6BU8">
    <property type="method" value="EM"/>
    <property type="resolution" value="3.50 A"/>
    <property type="chains" value="H=2-130"/>
</dbReference>
<dbReference type="PDB" id="6BY1">
    <property type="method" value="X-ray"/>
    <property type="resolution" value="3.94 A"/>
    <property type="chains" value="AH/BH=2-130"/>
</dbReference>
<dbReference type="PDB" id="6C4I">
    <property type="method" value="EM"/>
    <property type="resolution" value="3.24 A"/>
    <property type="chains" value="h=1-130"/>
</dbReference>
<dbReference type="PDB" id="6DNC">
    <property type="method" value="EM"/>
    <property type="resolution" value="3.70 A"/>
    <property type="chains" value="UA=1-130"/>
</dbReference>
<dbReference type="PDB" id="6ENF">
    <property type="method" value="EM"/>
    <property type="resolution" value="3.20 A"/>
    <property type="chains" value="h=2-130"/>
</dbReference>
<dbReference type="PDB" id="6ENJ">
    <property type="method" value="EM"/>
    <property type="resolution" value="3.70 A"/>
    <property type="chains" value="h=2-130"/>
</dbReference>
<dbReference type="PDB" id="6ENU">
    <property type="method" value="EM"/>
    <property type="resolution" value="3.10 A"/>
    <property type="chains" value="h=2-130"/>
</dbReference>
<dbReference type="PDB" id="6GWT">
    <property type="method" value="EM"/>
    <property type="resolution" value="3.80 A"/>
    <property type="chains" value="h=2-130"/>
</dbReference>
<dbReference type="PDB" id="6GXM">
    <property type="method" value="EM"/>
    <property type="resolution" value="3.80 A"/>
    <property type="chains" value="h=2-130"/>
</dbReference>
<dbReference type="PDB" id="6GXN">
    <property type="method" value="EM"/>
    <property type="resolution" value="3.90 A"/>
    <property type="chains" value="h=2-130"/>
</dbReference>
<dbReference type="PDB" id="6GXO">
    <property type="method" value="EM"/>
    <property type="resolution" value="3.90 A"/>
    <property type="chains" value="h=2-130"/>
</dbReference>
<dbReference type="PDB" id="6GXP">
    <property type="method" value="EM"/>
    <property type="resolution" value="4.40 A"/>
    <property type="chains" value="h=2-130"/>
</dbReference>
<dbReference type="PDB" id="6H4N">
    <property type="method" value="EM"/>
    <property type="resolution" value="3.00 A"/>
    <property type="chains" value="h=2-130"/>
</dbReference>
<dbReference type="PDB" id="6H58">
    <property type="method" value="EM"/>
    <property type="resolution" value="7.90 A"/>
    <property type="chains" value="h/hh=2-130"/>
</dbReference>
<dbReference type="PDB" id="6HRM">
    <property type="method" value="EM"/>
    <property type="resolution" value="2.96 A"/>
    <property type="chains" value="m=2-130"/>
</dbReference>
<dbReference type="PDB" id="6I7V">
    <property type="method" value="X-ray"/>
    <property type="resolution" value="2.90 A"/>
    <property type="chains" value="AH/BH=2-130"/>
</dbReference>
<dbReference type="PDB" id="6O7K">
    <property type="method" value="EM"/>
    <property type="resolution" value="4.20 A"/>
    <property type="chains" value="p=2-130"/>
</dbReference>
<dbReference type="PDB" id="6O9J">
    <property type="method" value="EM"/>
    <property type="resolution" value="3.90 A"/>
    <property type="chains" value="h=2-130"/>
</dbReference>
<dbReference type="PDB" id="6O9K">
    <property type="method" value="EM"/>
    <property type="resolution" value="4.00 A"/>
    <property type="chains" value="h=2-130"/>
</dbReference>
<dbReference type="PDB" id="6OFX">
    <property type="method" value="EM"/>
    <property type="resolution" value="3.30 A"/>
    <property type="chains" value="M=2-130"/>
</dbReference>
<dbReference type="PDB" id="6OG7">
    <property type="method" value="EM"/>
    <property type="resolution" value="3.30 A"/>
    <property type="chains" value="M=2-130"/>
</dbReference>
<dbReference type="PDB" id="6OGF">
    <property type="method" value="EM"/>
    <property type="resolution" value="3.90 A"/>
    <property type="chains" value="M=1-130"/>
</dbReference>
<dbReference type="PDB" id="6OGG">
    <property type="method" value="EM"/>
    <property type="resolution" value="4.20 A"/>
    <property type="chains" value="M=1-130"/>
</dbReference>
<dbReference type="PDB" id="6OGI">
    <property type="method" value="EM"/>
    <property type="resolution" value="3.40 A"/>
    <property type="chains" value="M=1-130"/>
</dbReference>
<dbReference type="PDB" id="6OM6">
    <property type="method" value="EM"/>
    <property type="resolution" value="3.10 A"/>
    <property type="chains" value="m=1-130"/>
</dbReference>
<dbReference type="PDB" id="6ORE">
    <property type="method" value="EM"/>
    <property type="resolution" value="2.90 A"/>
    <property type="chains" value="m=2-130"/>
</dbReference>
<dbReference type="PDB" id="6ORL">
    <property type="method" value="EM"/>
    <property type="resolution" value="3.50 A"/>
    <property type="chains" value="m=2-130"/>
</dbReference>
<dbReference type="PDB" id="6OSK">
    <property type="method" value="EM"/>
    <property type="resolution" value="3.60 A"/>
    <property type="chains" value="m=2-130"/>
</dbReference>
<dbReference type="PDB" id="6OSQ">
    <property type="method" value="EM"/>
    <property type="resolution" value="3.50 A"/>
    <property type="chains" value="m=2-130"/>
</dbReference>
<dbReference type="PDB" id="6OST">
    <property type="method" value="EM"/>
    <property type="resolution" value="4.20 A"/>
    <property type="chains" value="m=2-130"/>
</dbReference>
<dbReference type="PDB" id="6OT3">
    <property type="method" value="EM"/>
    <property type="resolution" value="3.90 A"/>
    <property type="chains" value="m=2-130"/>
</dbReference>
<dbReference type="PDB" id="6OUO">
    <property type="method" value="EM"/>
    <property type="resolution" value="3.70 A"/>
    <property type="chains" value="m=2-130"/>
</dbReference>
<dbReference type="PDB" id="6Q97">
    <property type="method" value="EM"/>
    <property type="resolution" value="3.90 A"/>
    <property type="chains" value="m=2-130"/>
</dbReference>
<dbReference type="PDB" id="6Q98">
    <property type="method" value="EM"/>
    <property type="resolution" value="4.30 A"/>
    <property type="chains" value="m=1-130"/>
</dbReference>
<dbReference type="PDB" id="6Q9A">
    <property type="method" value="EM"/>
    <property type="resolution" value="3.70 A"/>
    <property type="chains" value="m=2-130"/>
</dbReference>
<dbReference type="PDB" id="6SZS">
    <property type="method" value="EM"/>
    <property type="resolution" value="3.06 A"/>
    <property type="chains" value="h=1-130"/>
</dbReference>
<dbReference type="PDB" id="6TBV">
    <property type="method" value="EM"/>
    <property type="resolution" value="2.70 A"/>
    <property type="chains" value="S081=1-130"/>
</dbReference>
<dbReference type="PDB" id="6TC3">
    <property type="method" value="EM"/>
    <property type="resolution" value="2.70 A"/>
    <property type="chains" value="S081=1-130"/>
</dbReference>
<dbReference type="PDB" id="6VU3">
    <property type="method" value="EM"/>
    <property type="resolution" value="3.70 A"/>
    <property type="chains" value="N=2-130"/>
</dbReference>
<dbReference type="PDB" id="6VWL">
    <property type="method" value="EM"/>
    <property type="resolution" value="3.10 A"/>
    <property type="chains" value="g=1-130"/>
</dbReference>
<dbReference type="PDB" id="6VWM">
    <property type="method" value="EM"/>
    <property type="resolution" value="3.40 A"/>
    <property type="chains" value="g=1-130"/>
</dbReference>
<dbReference type="PDB" id="6VWN">
    <property type="method" value="EM"/>
    <property type="resolution" value="3.40 A"/>
    <property type="chains" value="g=1-130"/>
</dbReference>
<dbReference type="PDB" id="6VYQ">
    <property type="method" value="EM"/>
    <property type="resolution" value="3.70 A"/>
    <property type="chains" value="N=1-130"/>
</dbReference>
<dbReference type="PDB" id="6VYR">
    <property type="method" value="EM"/>
    <property type="resolution" value="3.80 A"/>
    <property type="chains" value="N=1-130"/>
</dbReference>
<dbReference type="PDB" id="6VYS">
    <property type="method" value="EM"/>
    <property type="resolution" value="3.70 A"/>
    <property type="chains" value="N=1-130"/>
</dbReference>
<dbReference type="PDB" id="6VYT">
    <property type="method" value="EM"/>
    <property type="resolution" value="14.00 A"/>
    <property type="chains" value="N=1-130"/>
</dbReference>
<dbReference type="PDB" id="6VYU">
    <property type="method" value="EM"/>
    <property type="resolution" value="7.00 A"/>
    <property type="chains" value="N=1-130"/>
</dbReference>
<dbReference type="PDB" id="6VYW">
    <property type="method" value="EM"/>
    <property type="resolution" value="7.00 A"/>
    <property type="chains" value="N=1-130"/>
</dbReference>
<dbReference type="PDB" id="6VYX">
    <property type="method" value="EM"/>
    <property type="resolution" value="9.90 A"/>
    <property type="chains" value="N=1-130"/>
</dbReference>
<dbReference type="PDB" id="6VYY">
    <property type="method" value="EM"/>
    <property type="resolution" value="9.90 A"/>
    <property type="chains" value="N=1-130"/>
</dbReference>
<dbReference type="PDB" id="6VYZ">
    <property type="method" value="EM"/>
    <property type="resolution" value="9.90 A"/>
    <property type="chains" value="N=1-130"/>
</dbReference>
<dbReference type="PDB" id="6VZ2">
    <property type="method" value="EM"/>
    <property type="resolution" value="10.00 A"/>
    <property type="chains" value="N=1-130"/>
</dbReference>
<dbReference type="PDB" id="6VZ3">
    <property type="method" value="EM"/>
    <property type="resolution" value="8.90 A"/>
    <property type="chains" value="N=2-130"/>
</dbReference>
<dbReference type="PDB" id="6VZ5">
    <property type="method" value="EM"/>
    <property type="resolution" value="8.90 A"/>
    <property type="chains" value="N=1-130"/>
</dbReference>
<dbReference type="PDB" id="6VZ7">
    <property type="method" value="EM"/>
    <property type="resolution" value="7.00 A"/>
    <property type="chains" value="N=2-130"/>
</dbReference>
<dbReference type="PDB" id="6VZJ">
    <property type="method" value="EM"/>
    <property type="resolution" value="4.10 A"/>
    <property type="chains" value="N=2-130"/>
</dbReference>
<dbReference type="PDB" id="6W6K">
    <property type="method" value="EM"/>
    <property type="resolution" value="3.60 A"/>
    <property type="chains" value="H=1-130"/>
</dbReference>
<dbReference type="PDB" id="6W77">
    <property type="method" value="EM"/>
    <property type="resolution" value="3.60 A"/>
    <property type="chains" value="H=1-130"/>
</dbReference>
<dbReference type="PDB" id="6W7M">
    <property type="method" value="EM"/>
    <property type="resolution" value="3.80 A"/>
    <property type="chains" value="H=1-130"/>
</dbReference>
<dbReference type="PDB" id="6W7N">
    <property type="method" value="EM"/>
    <property type="resolution" value="3.40 A"/>
    <property type="chains" value="H=1-130"/>
</dbReference>
<dbReference type="PDB" id="6W7W">
    <property type="method" value="EM"/>
    <property type="resolution" value="3.90 A"/>
    <property type="chains" value="G=1-130"/>
</dbReference>
<dbReference type="PDB" id="6WD0">
    <property type="method" value="EM"/>
    <property type="resolution" value="3.00 A"/>
    <property type="chains" value="M=2-130"/>
</dbReference>
<dbReference type="PDB" id="6WD1">
    <property type="method" value="EM"/>
    <property type="resolution" value="3.30 A"/>
    <property type="chains" value="M=2-130"/>
</dbReference>
<dbReference type="PDB" id="6WD2">
    <property type="method" value="EM"/>
    <property type="resolution" value="3.60 A"/>
    <property type="chains" value="M=2-130"/>
</dbReference>
<dbReference type="PDB" id="6WD3">
    <property type="method" value="EM"/>
    <property type="resolution" value="3.60 A"/>
    <property type="chains" value="M=2-130"/>
</dbReference>
<dbReference type="PDB" id="6WD4">
    <property type="method" value="EM"/>
    <property type="resolution" value="3.70 A"/>
    <property type="chains" value="M=2-130"/>
</dbReference>
<dbReference type="PDB" id="6WD5">
    <property type="method" value="EM"/>
    <property type="resolution" value="3.60 A"/>
    <property type="chains" value="M=2-130"/>
</dbReference>
<dbReference type="PDB" id="6WD6">
    <property type="method" value="EM"/>
    <property type="resolution" value="3.70 A"/>
    <property type="chains" value="M=2-130"/>
</dbReference>
<dbReference type="PDB" id="6WD7">
    <property type="method" value="EM"/>
    <property type="resolution" value="3.90 A"/>
    <property type="chains" value="M=2-130"/>
</dbReference>
<dbReference type="PDB" id="6WD8">
    <property type="method" value="EM"/>
    <property type="resolution" value="3.70 A"/>
    <property type="chains" value="M=2-130"/>
</dbReference>
<dbReference type="PDB" id="6WD9">
    <property type="method" value="EM"/>
    <property type="resolution" value="3.70 A"/>
    <property type="chains" value="M=2-130"/>
</dbReference>
<dbReference type="PDB" id="6WDA">
    <property type="method" value="EM"/>
    <property type="resolution" value="3.80 A"/>
    <property type="chains" value="M=2-130"/>
</dbReference>
<dbReference type="PDB" id="6WDB">
    <property type="method" value="EM"/>
    <property type="resolution" value="4.00 A"/>
    <property type="chains" value="M=2-130"/>
</dbReference>
<dbReference type="PDB" id="6WDC">
    <property type="method" value="EM"/>
    <property type="resolution" value="4.20 A"/>
    <property type="chains" value="M=2-130"/>
</dbReference>
<dbReference type="PDB" id="6WDD">
    <property type="method" value="EM"/>
    <property type="resolution" value="3.20 A"/>
    <property type="chains" value="M=2-130"/>
</dbReference>
<dbReference type="PDB" id="6WDE">
    <property type="method" value="EM"/>
    <property type="resolution" value="3.00 A"/>
    <property type="chains" value="M=2-130"/>
</dbReference>
<dbReference type="PDB" id="6WDF">
    <property type="method" value="EM"/>
    <property type="resolution" value="3.30 A"/>
    <property type="chains" value="M=2-130"/>
</dbReference>
<dbReference type="PDB" id="6WDG">
    <property type="method" value="EM"/>
    <property type="resolution" value="3.30 A"/>
    <property type="chains" value="M=2-130"/>
</dbReference>
<dbReference type="PDB" id="6WDH">
    <property type="method" value="EM"/>
    <property type="resolution" value="4.30 A"/>
    <property type="chains" value="M=2-130"/>
</dbReference>
<dbReference type="PDB" id="6WDI">
    <property type="method" value="EM"/>
    <property type="resolution" value="4.00 A"/>
    <property type="chains" value="M=2-130"/>
</dbReference>
<dbReference type="PDB" id="6WDJ">
    <property type="method" value="EM"/>
    <property type="resolution" value="3.70 A"/>
    <property type="chains" value="M=2-130"/>
</dbReference>
<dbReference type="PDB" id="6WDK">
    <property type="method" value="EM"/>
    <property type="resolution" value="3.60 A"/>
    <property type="chains" value="M=2-130"/>
</dbReference>
<dbReference type="PDB" id="6WDL">
    <property type="method" value="EM"/>
    <property type="resolution" value="3.70 A"/>
    <property type="chains" value="M=2-130"/>
</dbReference>
<dbReference type="PDB" id="6WDM">
    <property type="method" value="EM"/>
    <property type="resolution" value="3.60 A"/>
    <property type="chains" value="M=2-130"/>
</dbReference>
<dbReference type="PDB" id="6WNV">
    <property type="method" value="EM"/>
    <property type="resolution" value="3.50 A"/>
    <property type="chains" value="M=2-130"/>
</dbReference>
<dbReference type="PDB" id="6WNW">
    <property type="method" value="EM"/>
    <property type="resolution" value="3.20 A"/>
    <property type="chains" value="M=2-130"/>
</dbReference>
<dbReference type="PDB" id="6X6T">
    <property type="method" value="EM"/>
    <property type="resolution" value="3.20 A"/>
    <property type="chains" value="N=1-130"/>
</dbReference>
<dbReference type="PDB" id="6X7F">
    <property type="method" value="EM"/>
    <property type="resolution" value="3.50 A"/>
    <property type="chains" value="N=1-130"/>
</dbReference>
<dbReference type="PDB" id="6X7K">
    <property type="method" value="EM"/>
    <property type="resolution" value="3.10 A"/>
    <property type="chains" value="N=1-130"/>
</dbReference>
<dbReference type="PDB" id="6X9Q">
    <property type="method" value="EM"/>
    <property type="resolution" value="4.80 A"/>
    <property type="chains" value="N=1-130"/>
</dbReference>
<dbReference type="PDB" id="6XDQ">
    <property type="method" value="EM"/>
    <property type="resolution" value="3.70 A"/>
    <property type="chains" value="N=1-130"/>
</dbReference>
<dbReference type="PDB" id="6XDR">
    <property type="method" value="EM"/>
    <property type="resolution" value="4.70 A"/>
    <property type="chains" value="N=1-130"/>
</dbReference>
<dbReference type="PDB" id="6XE0">
    <property type="method" value="EM"/>
    <property type="resolution" value="6.80 A"/>
    <property type="chains" value="G=2-130"/>
</dbReference>
<dbReference type="PDB" id="6XGF">
    <property type="method" value="EM"/>
    <property type="resolution" value="5.00 A"/>
    <property type="chains" value="N=1-130"/>
</dbReference>
<dbReference type="PDB" id="6XII">
    <property type="method" value="EM"/>
    <property type="resolution" value="7.00 A"/>
    <property type="chains" value="N=1-130"/>
</dbReference>
<dbReference type="PDB" id="6XIJ">
    <property type="method" value="EM"/>
    <property type="resolution" value="8.00 A"/>
    <property type="chains" value="N=1-130"/>
</dbReference>
<dbReference type="PDB" id="6XZA">
    <property type="method" value="EM"/>
    <property type="resolution" value="2.66 A"/>
    <property type="chains" value="H1=2-130"/>
</dbReference>
<dbReference type="PDB" id="6XZB">
    <property type="method" value="EM"/>
    <property type="resolution" value="2.54 A"/>
    <property type="chains" value="H1=2-130"/>
</dbReference>
<dbReference type="PDB" id="6Y69">
    <property type="method" value="EM"/>
    <property type="resolution" value="2.86 A"/>
    <property type="chains" value="h=2-130"/>
</dbReference>
<dbReference type="PDB" id="6ZTJ">
    <property type="method" value="EM"/>
    <property type="resolution" value="3.40 A"/>
    <property type="chains" value="AH=1-130"/>
</dbReference>
<dbReference type="PDB" id="6ZTL">
    <property type="method" value="EM"/>
    <property type="resolution" value="3.50 A"/>
    <property type="chains" value="AH=1-130"/>
</dbReference>
<dbReference type="PDB" id="6ZTM">
    <property type="method" value="EM"/>
    <property type="resolution" value="3.30 A"/>
    <property type="chains" value="AH=1-130"/>
</dbReference>
<dbReference type="PDB" id="6ZTN">
    <property type="method" value="EM"/>
    <property type="resolution" value="3.90 A"/>
    <property type="chains" value="AH=1-130"/>
</dbReference>
<dbReference type="PDB" id="6ZTO">
    <property type="method" value="EM"/>
    <property type="resolution" value="3.00 A"/>
    <property type="chains" value="AH=1-130"/>
</dbReference>
<dbReference type="PDB" id="6ZTP">
    <property type="method" value="EM"/>
    <property type="resolution" value="3.00 A"/>
    <property type="chains" value="AH=1-130"/>
</dbReference>
<dbReference type="PDB" id="6ZU1">
    <property type="method" value="EM"/>
    <property type="resolution" value="3.00 A"/>
    <property type="chains" value="AH=1-130"/>
</dbReference>
<dbReference type="PDB" id="7ABZ">
    <property type="method" value="EM"/>
    <property type="resolution" value="3.21 A"/>
    <property type="chains" value="m=2-130"/>
</dbReference>
<dbReference type="PDB" id="7AC7">
    <property type="method" value="EM"/>
    <property type="resolution" value="3.08 A"/>
    <property type="chains" value="m=2-130"/>
</dbReference>
<dbReference type="PDB" id="7ACJ">
    <property type="method" value="EM"/>
    <property type="resolution" value="3.20 A"/>
    <property type="chains" value="m=2-130"/>
</dbReference>
<dbReference type="PDB" id="7ACR">
    <property type="method" value="EM"/>
    <property type="resolution" value="3.44 A"/>
    <property type="chains" value="m=2-130"/>
</dbReference>
<dbReference type="PDB" id="7AFI">
    <property type="method" value="EM"/>
    <property type="resolution" value="3.53 A"/>
    <property type="chains" value="H=1-130"/>
</dbReference>
<dbReference type="PDB" id="7AFL">
    <property type="method" value="EM"/>
    <property type="resolution" value="4.20 A"/>
    <property type="chains" value="H=1-130"/>
</dbReference>
<dbReference type="PDB" id="7AFO">
    <property type="method" value="EM"/>
    <property type="resolution" value="3.93 A"/>
    <property type="chains" value="H=1-130"/>
</dbReference>
<dbReference type="PDB" id="7B5K">
    <property type="method" value="EM"/>
    <property type="resolution" value="2.90 A"/>
    <property type="chains" value="h=2-130"/>
</dbReference>
<dbReference type="PDB" id="7BOD">
    <property type="method" value="EM"/>
    <property type="resolution" value="2.88 A"/>
    <property type="chains" value="H=1-130"/>
</dbReference>
<dbReference type="PDB" id="7BOE">
    <property type="method" value="EM"/>
    <property type="resolution" value="2.90 A"/>
    <property type="chains" value="H=1-130"/>
</dbReference>
<dbReference type="PDB" id="7BOF">
    <property type="method" value="EM"/>
    <property type="resolution" value="2.92 A"/>
    <property type="chains" value="H=1-130"/>
</dbReference>
<dbReference type="PDB" id="7BOG">
    <property type="method" value="EM"/>
    <property type="resolution" value="2.75 A"/>
    <property type="chains" value="H=1-130"/>
</dbReference>
<dbReference type="PDB" id="7BOH">
    <property type="method" value="EM"/>
    <property type="resolution" value="2.82 A"/>
    <property type="chains" value="H=1-130"/>
</dbReference>
<dbReference type="PDB" id="7BOI">
    <property type="method" value="EM"/>
    <property type="resolution" value="2.98 A"/>
    <property type="chains" value="H=1-130"/>
</dbReference>
<dbReference type="PDB" id="7D6Z">
    <property type="method" value="EM"/>
    <property type="resolution" value="3.40 A"/>
    <property type="chains" value="o=1-130"/>
</dbReference>
<dbReference type="PDB" id="7D80">
    <property type="method" value="EM"/>
    <property type="resolution" value="4.10 A"/>
    <property type="chains" value="I=1-130"/>
</dbReference>
<dbReference type="PDB" id="7JSS">
    <property type="method" value="EM"/>
    <property type="resolution" value="3.70 A"/>
    <property type="chains" value="M=2-130"/>
</dbReference>
<dbReference type="PDB" id="7JSW">
    <property type="method" value="EM"/>
    <property type="resolution" value="3.80 A"/>
    <property type="chains" value="M=2-130"/>
</dbReference>
<dbReference type="PDB" id="7JSZ">
    <property type="method" value="EM"/>
    <property type="resolution" value="3.70 A"/>
    <property type="chains" value="M=2-130"/>
</dbReference>
<dbReference type="PDB" id="7JT1">
    <property type="method" value="EM"/>
    <property type="resolution" value="3.30 A"/>
    <property type="chains" value="M=2-130"/>
</dbReference>
<dbReference type="PDB" id="7JT2">
    <property type="method" value="EM"/>
    <property type="resolution" value="3.50 A"/>
    <property type="chains" value="M=2-130"/>
</dbReference>
<dbReference type="PDB" id="7JT3">
    <property type="method" value="EM"/>
    <property type="resolution" value="3.70 A"/>
    <property type="chains" value="M=2-130"/>
</dbReference>
<dbReference type="PDB" id="7K00">
    <property type="method" value="EM"/>
    <property type="resolution" value="1.98 A"/>
    <property type="chains" value="H=1-130"/>
</dbReference>
<dbReference type="PDB" id="7K50">
    <property type="method" value="EM"/>
    <property type="resolution" value="3.40 A"/>
    <property type="chains" value="M=2-130"/>
</dbReference>
<dbReference type="PDB" id="7K51">
    <property type="method" value="EM"/>
    <property type="resolution" value="3.50 A"/>
    <property type="chains" value="M=2-130"/>
</dbReference>
<dbReference type="PDB" id="7K52">
    <property type="method" value="EM"/>
    <property type="resolution" value="3.40 A"/>
    <property type="chains" value="M=2-130"/>
</dbReference>
<dbReference type="PDB" id="7K53">
    <property type="method" value="EM"/>
    <property type="resolution" value="3.20 A"/>
    <property type="chains" value="M=2-130"/>
</dbReference>
<dbReference type="PDB" id="7K54">
    <property type="method" value="EM"/>
    <property type="resolution" value="3.20 A"/>
    <property type="chains" value="M=2-130"/>
</dbReference>
<dbReference type="PDB" id="7K55">
    <property type="method" value="EM"/>
    <property type="resolution" value="3.30 A"/>
    <property type="chains" value="M=2-130"/>
</dbReference>
<dbReference type="PDB" id="7LV0">
    <property type="method" value="EM"/>
    <property type="resolution" value="3.20 A"/>
    <property type="chains" value="M=2-130"/>
</dbReference>
<dbReference type="PDB" id="7M5D">
    <property type="method" value="EM"/>
    <property type="resolution" value="2.80 A"/>
    <property type="chains" value="m=2-130"/>
</dbReference>
<dbReference type="PDB" id="7N1P">
    <property type="method" value="EM"/>
    <property type="resolution" value="2.33 A"/>
    <property type="chains" value="SH=1-130"/>
</dbReference>
<dbReference type="PDB" id="7N2C">
    <property type="method" value="EM"/>
    <property type="resolution" value="2.72 A"/>
    <property type="chains" value="SH=1-130"/>
</dbReference>
<dbReference type="PDB" id="7N2U">
    <property type="method" value="EM"/>
    <property type="resolution" value="2.53 A"/>
    <property type="chains" value="SH=1-130"/>
</dbReference>
<dbReference type="PDB" id="7N2V">
    <property type="method" value="EM"/>
    <property type="resolution" value="2.54 A"/>
    <property type="chains" value="SH=1-130"/>
</dbReference>
<dbReference type="PDB" id="7N30">
    <property type="method" value="EM"/>
    <property type="resolution" value="2.66 A"/>
    <property type="chains" value="SH=1-130"/>
</dbReference>
<dbReference type="PDB" id="7N31">
    <property type="method" value="EM"/>
    <property type="resolution" value="2.69 A"/>
    <property type="chains" value="SH=1-130"/>
</dbReference>
<dbReference type="PDB" id="7NAR">
    <property type="method" value="EM"/>
    <property type="resolution" value="3.00 A"/>
    <property type="chains" value="H=1-130"/>
</dbReference>
<dbReference type="PDB" id="7NAS">
    <property type="method" value="EM"/>
    <property type="resolution" value="3.31 A"/>
    <property type="chains" value="H=1-130"/>
</dbReference>
<dbReference type="PDB" id="7NAT">
    <property type="method" value="EM"/>
    <property type="resolution" value="3.59 A"/>
    <property type="chains" value="H=1-130"/>
</dbReference>
<dbReference type="PDB" id="7NAU">
    <property type="method" value="EM"/>
    <property type="resolution" value="3.78 A"/>
    <property type="chains" value="H=1-130"/>
</dbReference>
<dbReference type="PDB" id="7NAV">
    <property type="method" value="EM"/>
    <property type="resolution" value="4.80 A"/>
    <property type="chains" value="H=1-130"/>
</dbReference>
<dbReference type="PDB" id="7NAX">
    <property type="method" value="EM"/>
    <property type="resolution" value="2.96 A"/>
    <property type="chains" value="H=1-130"/>
</dbReference>
<dbReference type="PDB" id="7NBU">
    <property type="method" value="EM"/>
    <property type="resolution" value="3.11 A"/>
    <property type="chains" value="H=2-130"/>
</dbReference>
<dbReference type="PDB" id="7O19">
    <property type="method" value="EM"/>
    <property type="resolution" value="2.90 A"/>
    <property type="chains" value="AH=1-130"/>
</dbReference>
<dbReference type="PDB" id="7O1A">
    <property type="method" value="EM"/>
    <property type="resolution" value="2.40 A"/>
    <property type="chains" value="AH=1-130"/>
</dbReference>
<dbReference type="PDB" id="7O1C">
    <property type="method" value="EM"/>
    <property type="resolution" value="2.60 A"/>
    <property type="chains" value="AH=1-130"/>
</dbReference>
<dbReference type="PDB" id="7O5H">
    <property type="method" value="EM"/>
    <property type="resolution" value="3.10 A"/>
    <property type="chains" value="H=2-130"/>
</dbReference>
<dbReference type="PDB" id="7OE0">
    <property type="method" value="EM"/>
    <property type="resolution" value="2.69 A"/>
    <property type="chains" value="H=2-130"/>
</dbReference>
<dbReference type="PDB" id="7OE1">
    <property type="method" value="EM"/>
    <property type="resolution" value="3.05 A"/>
    <property type="chains" value="H=2-130"/>
</dbReference>
<dbReference type="PDB" id="7OI0">
    <property type="method" value="EM"/>
    <property type="resolution" value="2.76 A"/>
    <property type="chains" value="H=2-130"/>
</dbReference>
<dbReference type="PDB" id="7OIZ">
    <property type="method" value="EM"/>
    <property type="resolution" value="2.90 A"/>
    <property type="chains" value="H=1-130"/>
</dbReference>
<dbReference type="PDB" id="7OJ0">
    <property type="method" value="EM"/>
    <property type="resolution" value="3.50 A"/>
    <property type="chains" value="H=1-130"/>
</dbReference>
<dbReference type="PDB" id="7P3K">
    <property type="method" value="EM"/>
    <property type="resolution" value="2.90 A"/>
    <property type="chains" value="H=1-130"/>
</dbReference>
<dbReference type="PDB" id="7PJU">
    <property type="method" value="EM"/>
    <property type="resolution" value="9.50 A"/>
    <property type="chains" value="h=1-130"/>
</dbReference>
<dbReference type="PDB" id="7PJV">
    <property type="method" value="EM"/>
    <property type="resolution" value="3.10 A"/>
    <property type="chains" value="h=1-130"/>
</dbReference>
<dbReference type="PDB" id="7PJY">
    <property type="method" value="EM"/>
    <property type="resolution" value="3.10 A"/>
    <property type="chains" value="h=1-130"/>
</dbReference>
<dbReference type="PDB" id="7QG8">
    <property type="method" value="EM"/>
    <property type="resolution" value="3.97 A"/>
    <property type="chains" value="7=1-130"/>
</dbReference>
<dbReference type="PDB" id="7QGH">
    <property type="method" value="EM"/>
    <property type="resolution" value="4.48 A"/>
    <property type="chains" value="7=1-130"/>
</dbReference>
<dbReference type="PDB" id="7QGN">
    <property type="method" value="EM"/>
    <property type="resolution" value="3.37 A"/>
    <property type="chains" value="7=1-130"/>
</dbReference>
<dbReference type="PDB" id="7QGR">
    <property type="method" value="EM"/>
    <property type="resolution" value="5.70 A"/>
    <property type="chains" value="7=1-130"/>
</dbReference>
<dbReference type="PDB" id="7S1G">
    <property type="method" value="EM"/>
    <property type="resolution" value="2.48 A"/>
    <property type="chains" value="o=1-130"/>
</dbReference>
<dbReference type="PDB" id="7S1H">
    <property type="method" value="EM"/>
    <property type="resolution" value="2.35 A"/>
    <property type="chains" value="o=1-130"/>
</dbReference>
<dbReference type="PDB" id="7S1I">
    <property type="method" value="EM"/>
    <property type="resolution" value="2.48 A"/>
    <property type="chains" value="o=1-130"/>
</dbReference>
<dbReference type="PDB" id="7S1J">
    <property type="method" value="EM"/>
    <property type="resolution" value="2.47 A"/>
    <property type="chains" value="o=1-130"/>
</dbReference>
<dbReference type="PDB" id="7S1K">
    <property type="method" value="EM"/>
    <property type="resolution" value="2.42 A"/>
    <property type="chains" value="o=1-130"/>
</dbReference>
<dbReference type="PDB" id="7SA4">
    <property type="method" value="EM"/>
    <property type="resolution" value="2.55 A"/>
    <property type="chains" value="m=1-130"/>
</dbReference>
<dbReference type="PDB" id="7SS9">
    <property type="method" value="EM"/>
    <property type="resolution" value="3.90 A"/>
    <property type="chains" value="M=2-130"/>
</dbReference>
<dbReference type="PDB" id="7SSD">
    <property type="method" value="EM"/>
    <property type="resolution" value="3.30 A"/>
    <property type="chains" value="M=2-130"/>
</dbReference>
<dbReference type="PDB" id="7SSL">
    <property type="method" value="EM"/>
    <property type="resolution" value="3.80 A"/>
    <property type="chains" value="M=2-130"/>
</dbReference>
<dbReference type="PDB" id="7SSN">
    <property type="method" value="EM"/>
    <property type="resolution" value="3.20 A"/>
    <property type="chains" value="M=2-130"/>
</dbReference>
<dbReference type="PDB" id="7SSO">
    <property type="method" value="EM"/>
    <property type="resolution" value="3.20 A"/>
    <property type="chains" value="M=2-130"/>
</dbReference>
<dbReference type="PDB" id="7SSW">
    <property type="method" value="EM"/>
    <property type="resolution" value="3.80 A"/>
    <property type="chains" value="M=2-130"/>
</dbReference>
<dbReference type="PDB" id="7ST2">
    <property type="method" value="EM"/>
    <property type="resolution" value="2.90 A"/>
    <property type="chains" value="M=2-130"/>
</dbReference>
<dbReference type="PDB" id="7ST6">
    <property type="method" value="EM"/>
    <property type="resolution" value="3.00 A"/>
    <property type="chains" value="M=2-130"/>
</dbReference>
<dbReference type="PDB" id="7ST7">
    <property type="method" value="EM"/>
    <property type="resolution" value="3.20 A"/>
    <property type="chains" value="M=2-130"/>
</dbReference>
<dbReference type="PDB" id="7TOS">
    <property type="method" value="EM"/>
    <property type="resolution" value="2.90 A"/>
    <property type="chains" value="S08=2-130"/>
</dbReference>
<dbReference type="PDB" id="7UG7">
    <property type="method" value="EM"/>
    <property type="resolution" value="2.58 A"/>
    <property type="chains" value="SH=1-130"/>
</dbReference>
<dbReference type="PDB" id="7UPH">
    <property type="method" value="EM"/>
    <property type="resolution" value="4.18 A"/>
    <property type="chains" value="c=2-130"/>
</dbReference>
<dbReference type="PDB" id="7Y7C">
    <property type="method" value="EM"/>
    <property type="resolution" value="2.51 A"/>
    <property type="chains" value="H=1-130"/>
</dbReference>
<dbReference type="PDB" id="7Y7D">
    <property type="method" value="EM"/>
    <property type="resolution" value="2.58 A"/>
    <property type="chains" value="H=1-130"/>
</dbReference>
<dbReference type="PDB" id="7Y7E">
    <property type="method" value="EM"/>
    <property type="resolution" value="2.41 A"/>
    <property type="chains" value="H=1-130"/>
</dbReference>
<dbReference type="PDB" id="7Y7F">
    <property type="method" value="EM"/>
    <property type="resolution" value="2.43 A"/>
    <property type="chains" value="H=1-130"/>
</dbReference>
<dbReference type="PDB" id="7Y7G">
    <property type="method" value="EM"/>
    <property type="resolution" value="2.34 A"/>
    <property type="chains" value="H=1-130"/>
</dbReference>
<dbReference type="PDB" id="7Y7H">
    <property type="method" value="EM"/>
    <property type="resolution" value="2.51 A"/>
    <property type="chains" value="H=1-130"/>
</dbReference>
<dbReference type="PDB" id="7ZTA">
    <property type="method" value="EM"/>
    <property type="resolution" value="2.70 A"/>
    <property type="chains" value="S081=2-130"/>
</dbReference>
<dbReference type="PDB" id="8A3L">
    <property type="method" value="EM"/>
    <property type="resolution" value="3.42 A"/>
    <property type="chains" value="H=1-130"/>
</dbReference>
<dbReference type="PDB" id="8AKN">
    <property type="method" value="EM"/>
    <property type="resolution" value="2.30 A"/>
    <property type="chains" value="I=1-130"/>
</dbReference>
<dbReference type="PDB" id="8AM9">
    <property type="method" value="EM"/>
    <property type="resolution" value="2.80 A"/>
    <property type="chains" value="I=1-130"/>
</dbReference>
<dbReference type="PDB" id="8AYE">
    <property type="method" value="EM"/>
    <property type="resolution" value="1.96 A"/>
    <property type="chains" value="H=1-130"/>
</dbReference>
<dbReference type="PDB" id="8B0X">
    <property type="method" value="EM"/>
    <property type="resolution" value="1.55 A"/>
    <property type="chains" value="H=1-130"/>
</dbReference>
<dbReference type="PDB" id="8B7Y">
    <property type="method" value="EM"/>
    <property type="resolution" value="3.00 A"/>
    <property type="chains" value="P=1-130"/>
</dbReference>
<dbReference type="PDB" id="8BF7">
    <property type="method" value="EM"/>
    <property type="resolution" value="2.33 A"/>
    <property type="chains" value="l=1-130"/>
</dbReference>
<dbReference type="PDB" id="8BGE">
    <property type="method" value="EM"/>
    <property type="resolution" value="2.11 A"/>
    <property type="chains" value="l=1-130"/>
</dbReference>
<dbReference type="PDB" id="8BGH">
    <property type="method" value="EM"/>
    <property type="resolution" value="2.88 A"/>
    <property type="chains" value="l=1-130"/>
</dbReference>
<dbReference type="PDB" id="8BH4">
    <property type="method" value="EM"/>
    <property type="resolution" value="2.62 A"/>
    <property type="chains" value="l=1-130"/>
</dbReference>
<dbReference type="PDB" id="8BHJ">
    <property type="method" value="EM"/>
    <property type="resolution" value="2.81 A"/>
    <property type="chains" value="l=1-130"/>
</dbReference>
<dbReference type="PDB" id="8BHL">
    <property type="method" value="EM"/>
    <property type="resolution" value="2.21 A"/>
    <property type="chains" value="l=1-130"/>
</dbReference>
<dbReference type="PDB" id="8BHN">
    <property type="method" value="EM"/>
    <property type="resolution" value="2.85 A"/>
    <property type="chains" value="l=1-130"/>
</dbReference>
<dbReference type="PDB" id="8BHP">
    <property type="method" value="EM"/>
    <property type="resolution" value="2.37 A"/>
    <property type="chains" value="l=1-130"/>
</dbReference>
<dbReference type="PDB" id="8BIL">
    <property type="method" value="EM"/>
    <property type="resolution" value="2.04 A"/>
    <property type="chains" value="l=1-130"/>
</dbReference>
<dbReference type="PDB" id="8BIM">
    <property type="method" value="EM"/>
    <property type="resolution" value="2.04 A"/>
    <property type="chains" value="l=1-130"/>
</dbReference>
<dbReference type="PDB" id="8CAI">
    <property type="method" value="EM"/>
    <property type="resolution" value="2.08 A"/>
    <property type="chains" value="H=1-130"/>
</dbReference>
<dbReference type="PDB" id="8CEP">
    <property type="method" value="EM"/>
    <property type="resolution" value="2.04 A"/>
    <property type="chains" value="H=1-130"/>
</dbReference>
<dbReference type="PDB" id="8CGJ">
    <property type="method" value="EM"/>
    <property type="resolution" value="1.79 A"/>
    <property type="chains" value="H=1-130"/>
</dbReference>
<dbReference type="PDB" id="8CGR">
    <property type="method" value="EM"/>
    <property type="resolution" value="2.12 A"/>
    <property type="chains" value="H=1-130"/>
</dbReference>
<dbReference type="PDB" id="8CGU">
    <property type="method" value="EM"/>
    <property type="resolution" value="1.89 A"/>
    <property type="chains" value="H=1-130"/>
</dbReference>
<dbReference type="PDB" id="8EIU">
    <property type="method" value="EM"/>
    <property type="resolution" value="2.24 A"/>
    <property type="chains" value="H=1-130"/>
</dbReference>
<dbReference type="PDB" id="8EKC">
    <property type="method" value="EM"/>
    <property type="resolution" value="2.70 A"/>
    <property type="chains" value="h=1-130"/>
</dbReference>
<dbReference type="PDB" id="8EMM">
    <property type="method" value="EM"/>
    <property type="resolution" value="2.10 A"/>
    <property type="chains" value="H=1-130"/>
</dbReference>
<dbReference type="PDB" id="8EYQ">
    <property type="method" value="EM"/>
    <property type="resolution" value="3.30 A"/>
    <property type="chains" value="H=1-130"/>
</dbReference>
<dbReference type="PDB" id="8EYT">
    <property type="method" value="EM"/>
    <property type="resolution" value="2.80 A"/>
    <property type="chains" value="H=1-130"/>
</dbReference>
<dbReference type="PDB" id="8FIZ">
    <property type="method" value="EM"/>
    <property type="resolution" value="3.80 A"/>
    <property type="chains" value="AQ=1-130"/>
</dbReference>
<dbReference type="PDB" id="8FTO">
    <property type="method" value="EM"/>
    <property type="resolution" value="1.85 A"/>
    <property type="chains" value="H=1-130"/>
</dbReference>
<dbReference type="PDB" id="8FZD">
    <property type="method" value="EM"/>
    <property type="resolution" value="3.10 A"/>
    <property type="chains" value="h=1-130"/>
</dbReference>
<dbReference type="PDB" id="8FZE">
    <property type="method" value="EM"/>
    <property type="resolution" value="3.00 A"/>
    <property type="chains" value="h=1-130"/>
</dbReference>
<dbReference type="PDB" id="8FZF">
    <property type="method" value="EM"/>
    <property type="resolution" value="3.20 A"/>
    <property type="chains" value="h=1-130"/>
</dbReference>
<dbReference type="PDB" id="8FZG">
    <property type="method" value="EM"/>
    <property type="resolution" value="3.10 A"/>
    <property type="chains" value="h=1-130"/>
</dbReference>
<dbReference type="PDB" id="8FZH">
    <property type="method" value="EM"/>
    <property type="resolution" value="2.90 A"/>
    <property type="chains" value="h=1-130"/>
</dbReference>
<dbReference type="PDB" id="8FZI">
    <property type="method" value="EM"/>
    <property type="resolution" value="3.10 A"/>
    <property type="chains" value="h=1-130"/>
</dbReference>
<dbReference type="PDB" id="8FZJ">
    <property type="method" value="EM"/>
    <property type="resolution" value="3.00 A"/>
    <property type="chains" value="h=1-130"/>
</dbReference>
<dbReference type="PDB" id="8G2U">
    <property type="method" value="EM"/>
    <property type="resolution" value="3.00 A"/>
    <property type="chains" value="g=2-130"/>
</dbReference>
<dbReference type="PDB" id="8G31">
    <property type="method" value="EM"/>
    <property type="resolution" value="3.20 A"/>
    <property type="chains" value="g=2-130"/>
</dbReference>
<dbReference type="PDB" id="8G34">
    <property type="method" value="EM"/>
    <property type="resolution" value="3.20 A"/>
    <property type="chains" value="g=2-130"/>
</dbReference>
<dbReference type="PDB" id="8G38">
    <property type="method" value="EM"/>
    <property type="resolution" value="3.20 A"/>
    <property type="chains" value="g=2-130"/>
</dbReference>
<dbReference type="PDB" id="8G6W">
    <property type="method" value="EM"/>
    <property type="resolution" value="2.02 A"/>
    <property type="chains" value="H=1-130"/>
</dbReference>
<dbReference type="PDB" id="8G7P">
    <property type="method" value="EM"/>
    <property type="resolution" value="2.90 A"/>
    <property type="chains" value="h=1-130"/>
</dbReference>
<dbReference type="PDB" id="8G7Q">
    <property type="method" value="EM"/>
    <property type="resolution" value="3.10 A"/>
    <property type="chains" value="h=1-130"/>
</dbReference>
<dbReference type="PDB" id="8G7R">
    <property type="method" value="EM"/>
    <property type="resolution" value="2.80 A"/>
    <property type="chains" value="h=1-130"/>
</dbReference>
<dbReference type="PDB" id="8G7S">
    <property type="method" value="EM"/>
    <property type="resolution" value="3.10 A"/>
    <property type="chains" value="h=1-130"/>
</dbReference>
<dbReference type="PDB" id="8GHU">
    <property type="method" value="EM"/>
    <property type="resolution" value="3.00 A"/>
    <property type="chains" value="h=2-130"/>
</dbReference>
<dbReference type="PDB" id="8HSP">
    <property type="method" value="EM"/>
    <property type="resolution" value="2.32 A"/>
    <property type="chains" value="H=1-130"/>
</dbReference>
<dbReference type="PDB" id="8HTZ">
    <property type="method" value="EM"/>
    <property type="resolution" value="2.40 A"/>
    <property type="chains" value="H=1-130"/>
</dbReference>
<dbReference type="PDB" id="8HU1">
    <property type="method" value="EM"/>
    <property type="resolution" value="2.69 A"/>
    <property type="chains" value="H=1-130"/>
</dbReference>
<dbReference type="PDB" id="8IFB">
    <property type="method" value="EM"/>
    <property type="resolution" value="2.43 A"/>
    <property type="chains" value="H=1-130"/>
</dbReference>
<dbReference type="PDB" id="8IFC">
    <property type="method" value="EM"/>
    <property type="resolution" value="2.90 A"/>
    <property type="chains" value="H=1-130"/>
</dbReference>
<dbReference type="PDB" id="8JSG">
    <property type="method" value="EM"/>
    <property type="resolution" value="4.60 A"/>
    <property type="chains" value="p=2-130"/>
</dbReference>
<dbReference type="PDB" id="8JSH">
    <property type="method" value="EM"/>
    <property type="resolution" value="4.40 A"/>
    <property type="chains" value="p=1-130"/>
</dbReference>
<dbReference type="PDB" id="8K3O">
    <property type="method" value="EM"/>
    <property type="resolution" value="3.88 A"/>
    <property type="chains" value="H=1-130"/>
</dbReference>
<dbReference type="PDB" id="8K4E">
    <property type="method" value="EM"/>
    <property type="resolution" value="3.40 A"/>
    <property type="chains" value="H=1-130"/>
</dbReference>
<dbReference type="PDB" id="8P16">
    <property type="method" value="EM"/>
    <property type="resolution" value="2.77 A"/>
    <property type="chains" value="m=1-130"/>
</dbReference>
<dbReference type="PDB" id="8P17">
    <property type="method" value="EM"/>
    <property type="resolution" value="2.78 A"/>
    <property type="chains" value="m=1-130"/>
</dbReference>
<dbReference type="PDB" id="8P18">
    <property type="method" value="EM"/>
    <property type="resolution" value="2.77 A"/>
    <property type="chains" value="m=1-130"/>
</dbReference>
<dbReference type="PDB" id="8PEG">
    <property type="method" value="EM"/>
    <property type="resolution" value="3.30 A"/>
    <property type="chains" value="H=1-130"/>
</dbReference>
<dbReference type="PDB" id="8PHJ">
    <property type="method" value="EM"/>
    <property type="resolution" value="3.67 A"/>
    <property type="chains" value="H=1-130"/>
</dbReference>
<dbReference type="PDB" id="8PKL">
    <property type="method" value="EM"/>
    <property type="resolution" value="3.09 A"/>
    <property type="chains" value="H=1-130"/>
</dbReference>
<dbReference type="PDB" id="8PVA">
    <property type="method" value="EM"/>
    <property type="resolution" value="4.50 A"/>
    <property type="chains" value="H=1-130"/>
</dbReference>
<dbReference type="PDB" id="8Q4F">
    <property type="method" value="EM"/>
    <property type="resolution" value="3.10 A"/>
    <property type="chains" value="H=1-130"/>
</dbReference>
<dbReference type="PDB" id="8QBT">
    <property type="method" value="EM"/>
    <property type="resolution" value="2.20 A"/>
    <property type="chains" value="p=1-130"/>
</dbReference>
<dbReference type="PDB" id="8QK7">
    <property type="method" value="EM"/>
    <property type="resolution" value="2.77 A"/>
    <property type="chains" value="m=1-130"/>
</dbReference>
<dbReference type="PDB" id="8QOA">
    <property type="method" value="EM"/>
    <property type="resolution" value="2.00 A"/>
    <property type="chains" value="H=1-130"/>
</dbReference>
<dbReference type="PDB" id="8R3V">
    <property type="method" value="EM"/>
    <property type="resolution" value="3.28 A"/>
    <property type="chains" value="H1/H2=1-130"/>
</dbReference>
<dbReference type="PDB" id="8R6C">
    <property type="method" value="EM"/>
    <property type="resolution" value="2.20 A"/>
    <property type="chains" value="H=1-130"/>
</dbReference>
<dbReference type="PDB" id="8R8M">
    <property type="method" value="EM"/>
    <property type="resolution" value="2.40 A"/>
    <property type="chains" value="H=1-130"/>
</dbReference>
<dbReference type="PDB" id="8RCL">
    <property type="method" value="EM"/>
    <property type="resolution" value="3.49 A"/>
    <property type="chains" value="H1/H2=1-130"/>
</dbReference>
<dbReference type="PDB" id="8RCM">
    <property type="method" value="EM"/>
    <property type="resolution" value="3.59 A"/>
    <property type="chains" value="H1/H2=1-130"/>
</dbReference>
<dbReference type="PDB" id="8RCS">
    <property type="method" value="EM"/>
    <property type="resolution" value="4.46 A"/>
    <property type="chains" value="H1/H2=1-130"/>
</dbReference>
<dbReference type="PDB" id="8RCT">
    <property type="method" value="EM"/>
    <property type="resolution" value="5.32 A"/>
    <property type="chains" value="H1/H2=1-130"/>
</dbReference>
<dbReference type="PDB" id="8SYL">
    <property type="method" value="EM"/>
    <property type="resolution" value="2.90 A"/>
    <property type="chains" value="h=1-130"/>
</dbReference>
<dbReference type="PDB" id="8T5D">
    <property type="method" value="EM"/>
    <property type="resolution" value="3.20 A"/>
    <property type="chains" value="g=2-130"/>
</dbReference>
<dbReference type="PDB" id="8T5H">
    <property type="method" value="EM"/>
    <property type="resolution" value="3.30 A"/>
    <property type="chains" value="g=2-130"/>
</dbReference>
<dbReference type="PDB" id="8UPO">
    <property type="method" value="EM"/>
    <property type="resolution" value="5.50 A"/>
    <property type="chains" value="N=1-130"/>
</dbReference>
<dbReference type="PDB" id="8UPR">
    <property type="method" value="EM"/>
    <property type="resolution" value="5.30 A"/>
    <property type="chains" value="N=1-130"/>
</dbReference>
<dbReference type="PDB" id="8UQL">
    <property type="method" value="EM"/>
    <property type="resolution" value="3.20 A"/>
    <property type="chains" value="N=1-130"/>
</dbReference>
<dbReference type="PDB" id="8UQM">
    <property type="method" value="EM"/>
    <property type="resolution" value="5.30 A"/>
    <property type="chains" value="N=1-130"/>
</dbReference>
<dbReference type="PDB" id="8UQP">
    <property type="method" value="EM"/>
    <property type="resolution" value="3.80 A"/>
    <property type="chains" value="N=1-130"/>
</dbReference>
<dbReference type="PDB" id="8UR0">
    <property type="method" value="EM"/>
    <property type="resolution" value="3.40 A"/>
    <property type="chains" value="N=1-130"/>
</dbReference>
<dbReference type="PDB" id="8URH">
    <property type="method" value="EM"/>
    <property type="resolution" value="5.70 A"/>
    <property type="chains" value="N=1-130"/>
</dbReference>
<dbReference type="PDB" id="8URI">
    <property type="method" value="EM"/>
    <property type="resolution" value="5.30 A"/>
    <property type="chains" value="N=1-130"/>
</dbReference>
<dbReference type="PDB" id="8URX">
    <property type="method" value="EM"/>
    <property type="resolution" value="6.60 A"/>
    <property type="chains" value="N=1-130"/>
</dbReference>
<dbReference type="PDB" id="8URY">
    <property type="method" value="EM"/>
    <property type="resolution" value="3.10 A"/>
    <property type="chains" value="N=1-130"/>
</dbReference>
<dbReference type="PDB" id="8VS9">
    <property type="method" value="EM"/>
    <property type="resolution" value="3.90 A"/>
    <property type="chains" value="S08=1-130"/>
</dbReference>
<dbReference type="PDB" id="8VSA">
    <property type="method" value="EM"/>
    <property type="resolution" value="3.70 A"/>
    <property type="chains" value="S08=1-130"/>
</dbReference>
<dbReference type="PDB" id="8YUO">
    <property type="method" value="EM"/>
    <property type="resolution" value="2.25 A"/>
    <property type="chains" value="H=1-130"/>
</dbReference>
<dbReference type="PDB" id="8YUP">
    <property type="method" value="EM"/>
    <property type="resolution" value="2.39 A"/>
    <property type="chains" value="H=1-130"/>
</dbReference>
<dbReference type="PDB" id="8YUQ">
    <property type="method" value="EM"/>
    <property type="resolution" value="2.41 A"/>
    <property type="chains" value="H=1-130"/>
</dbReference>
<dbReference type="PDB" id="8YUR">
    <property type="method" value="EM"/>
    <property type="resolution" value="2.47 A"/>
    <property type="chains" value="H=1-130"/>
</dbReference>
<dbReference type="PDB" id="8YUS">
    <property type="method" value="EM"/>
    <property type="resolution" value="2.43 A"/>
    <property type="chains" value="H=1-130"/>
</dbReference>
<dbReference type="PDB" id="9DUK">
    <property type="method" value="EM"/>
    <property type="resolution" value="2.56 A"/>
    <property type="chains" value="H=1-130"/>
</dbReference>
<dbReference type="PDB" id="9DUL">
    <property type="method" value="EM"/>
    <property type="resolution" value="2.56 A"/>
    <property type="chains" value="H=1-130"/>
</dbReference>
<dbReference type="PDB" id="9FBV">
    <property type="method" value="EM"/>
    <property type="resolution" value="2.40 A"/>
    <property type="chains" value="H=1-130"/>
</dbReference>
<dbReference type="PDB" id="9GFT">
    <property type="method" value="EM"/>
    <property type="resolution" value="3.10 A"/>
    <property type="chains" value="7/AH=1-130"/>
</dbReference>
<dbReference type="PDB" id="9GGR">
    <property type="method" value="EM"/>
    <property type="resolution" value="3.20 A"/>
    <property type="chains" value="7/AH=1-130"/>
</dbReference>
<dbReference type="PDB" id="9GUP">
    <property type="method" value="EM"/>
    <property type="resolution" value="2.80 A"/>
    <property type="chains" value="I=1-130"/>
</dbReference>
<dbReference type="PDB" id="9GUQ">
    <property type="method" value="EM"/>
    <property type="resolution" value="3.10 A"/>
    <property type="chains" value="I=1-130"/>
</dbReference>
<dbReference type="PDB" id="9GUS">
    <property type="method" value="EM"/>
    <property type="resolution" value="3.50 A"/>
    <property type="chains" value="I=1-130"/>
</dbReference>
<dbReference type="PDB" id="9GUT">
    <property type="method" value="EM"/>
    <property type="resolution" value="2.80 A"/>
    <property type="chains" value="I=1-130"/>
</dbReference>
<dbReference type="PDB" id="9GUU">
    <property type="method" value="EM"/>
    <property type="resolution" value="2.50 A"/>
    <property type="chains" value="I=1-130"/>
</dbReference>
<dbReference type="PDB" id="9GUV">
    <property type="method" value="EM"/>
    <property type="resolution" value="3.00 A"/>
    <property type="chains" value="I=1-130"/>
</dbReference>
<dbReference type="PDB" id="9GUW">
    <property type="method" value="EM"/>
    <property type="resolution" value="3.10 A"/>
    <property type="chains" value="I=1-130"/>
</dbReference>
<dbReference type="PDB" id="9GUX">
    <property type="method" value="EM"/>
    <property type="resolution" value="3.30 A"/>
    <property type="chains" value="I=1-130"/>
</dbReference>
<dbReference type="PDB" id="9MOR">
    <property type="method" value="EM"/>
    <property type="resolution" value="2.65 A"/>
    <property type="chains" value="m=1-130"/>
</dbReference>
<dbReference type="PDB" id="9MQ4">
    <property type="method" value="EM"/>
    <property type="resolution" value="2.78 A"/>
    <property type="chains" value="m=1-130"/>
</dbReference>
<dbReference type="PDBsum" id="1EG0"/>
<dbReference type="PDBsum" id="1S03"/>
<dbReference type="PDBsum" id="2YKR"/>
<dbReference type="PDBsum" id="3IY8"/>
<dbReference type="PDBsum" id="3J9Y"/>
<dbReference type="PDBsum" id="3J9Z"/>
<dbReference type="PDBsum" id="3JA1"/>
<dbReference type="PDBsum" id="3JBU"/>
<dbReference type="PDBsum" id="3JBV"/>
<dbReference type="PDBsum" id="3JCD"/>
<dbReference type="PDBsum" id="3JCE"/>
<dbReference type="PDBsum" id="3JCJ"/>
<dbReference type="PDBsum" id="3JCN"/>
<dbReference type="PDBsum" id="4A2I"/>
<dbReference type="PDBsum" id="4ADV"/>
<dbReference type="PDBsum" id="4U1U"/>
<dbReference type="PDBsum" id="4U1V"/>
<dbReference type="PDBsum" id="4U20"/>
<dbReference type="PDBsum" id="4U24"/>
<dbReference type="PDBsum" id="4U25"/>
<dbReference type="PDBsum" id="4U26"/>
<dbReference type="PDBsum" id="4U27"/>
<dbReference type="PDBsum" id="4V47"/>
<dbReference type="PDBsum" id="4V48"/>
<dbReference type="PDBsum" id="4V4H"/>
<dbReference type="PDBsum" id="4V4Q"/>
<dbReference type="PDBsum" id="4V4V"/>
<dbReference type="PDBsum" id="4V4W"/>
<dbReference type="PDBsum" id="4V50"/>
<dbReference type="PDBsum" id="4V52"/>
<dbReference type="PDBsum" id="4V53"/>
<dbReference type="PDBsum" id="4V54"/>
<dbReference type="PDBsum" id="4V55"/>
<dbReference type="PDBsum" id="4V56"/>
<dbReference type="PDBsum" id="4V57"/>
<dbReference type="PDBsum" id="4V5B"/>
<dbReference type="PDBsum" id="4V5H"/>
<dbReference type="PDBsum" id="4V5Y"/>
<dbReference type="PDBsum" id="4V64"/>
<dbReference type="PDBsum" id="4V65"/>
<dbReference type="PDBsum" id="4V66"/>
<dbReference type="PDBsum" id="4V69"/>
<dbReference type="PDBsum" id="4V6C"/>
<dbReference type="PDBsum" id="4V6D"/>
<dbReference type="PDBsum" id="4V6E"/>
<dbReference type="PDBsum" id="4V6K"/>
<dbReference type="PDBsum" id="4V6L"/>
<dbReference type="PDBsum" id="4V6M"/>
<dbReference type="PDBsum" id="4V6N"/>
<dbReference type="PDBsum" id="4V6O"/>
<dbReference type="PDBsum" id="4V6P"/>
<dbReference type="PDBsum" id="4V6Q"/>
<dbReference type="PDBsum" id="4V6R"/>
<dbReference type="PDBsum" id="4V6S"/>
<dbReference type="PDBsum" id="4V6T"/>
<dbReference type="PDBsum" id="4V6V"/>
<dbReference type="PDBsum" id="4V6Y"/>
<dbReference type="PDBsum" id="4V6Z"/>
<dbReference type="PDBsum" id="4V70"/>
<dbReference type="PDBsum" id="4V71"/>
<dbReference type="PDBsum" id="4V72"/>
<dbReference type="PDBsum" id="4V73"/>
<dbReference type="PDBsum" id="4V74"/>
<dbReference type="PDBsum" id="4V75"/>
<dbReference type="PDBsum" id="4V76"/>
<dbReference type="PDBsum" id="4V77"/>
<dbReference type="PDBsum" id="4V78"/>
<dbReference type="PDBsum" id="4V79"/>
<dbReference type="PDBsum" id="4V7A"/>
<dbReference type="PDBsum" id="4V7B"/>
<dbReference type="PDBsum" id="4V7C"/>
<dbReference type="PDBsum" id="4V7D"/>
<dbReference type="PDBsum" id="4V7I"/>
<dbReference type="PDBsum" id="4V7S"/>
<dbReference type="PDBsum" id="4V7T"/>
<dbReference type="PDBsum" id="4V7U"/>
<dbReference type="PDBsum" id="4V7V"/>
<dbReference type="PDBsum" id="4V85"/>
<dbReference type="PDBsum" id="4V89"/>
<dbReference type="PDBsum" id="4V9C"/>
<dbReference type="PDBsum" id="4V9D"/>
<dbReference type="PDBsum" id="4V9O"/>
<dbReference type="PDBsum" id="4V9P"/>
<dbReference type="PDBsum" id="4WF1"/>
<dbReference type="PDBsum" id="4WOI"/>
<dbReference type="PDBsum" id="4WWW"/>
<dbReference type="PDBsum" id="4YBB"/>
<dbReference type="PDBsum" id="5AFI"/>
<dbReference type="PDBsum" id="5H5U"/>
<dbReference type="PDBsum" id="5IQR"/>
<dbReference type="PDBsum" id="5IT8"/>
<dbReference type="PDBsum" id="5J5B"/>
<dbReference type="PDBsum" id="5J7L"/>
<dbReference type="PDBsum" id="5J88"/>
<dbReference type="PDBsum" id="5J8A"/>
<dbReference type="PDBsum" id="5J91"/>
<dbReference type="PDBsum" id="5JC9"/>
<dbReference type="PDBsum" id="5JTE"/>
<dbReference type="PDBsum" id="5JU8"/>
<dbReference type="PDBsum" id="5KCR"/>
<dbReference type="PDBsum" id="5KCS"/>
<dbReference type="PDBsum" id="5KPS"/>
<dbReference type="PDBsum" id="5KPV"/>
<dbReference type="PDBsum" id="5KPW"/>
<dbReference type="PDBsum" id="5KPX"/>
<dbReference type="PDBsum" id="5L3P"/>
<dbReference type="PDBsum" id="5LZA"/>
<dbReference type="PDBsum" id="5LZB"/>
<dbReference type="PDBsum" id="5LZC"/>
<dbReference type="PDBsum" id="5LZD"/>
<dbReference type="PDBsum" id="5LZE"/>
<dbReference type="PDBsum" id="5LZF"/>
<dbReference type="PDBsum" id="5MDV"/>
<dbReference type="PDBsum" id="5MDW"/>
<dbReference type="PDBsum" id="5MDY"/>
<dbReference type="PDBsum" id="5MDZ"/>
<dbReference type="PDBsum" id="5ME0"/>
<dbReference type="PDBsum" id="5ME1"/>
<dbReference type="PDBsum" id="5MGP"/>
<dbReference type="PDBsum" id="5MY1"/>
<dbReference type="PDBsum" id="5NO2"/>
<dbReference type="PDBsum" id="5NO3"/>
<dbReference type="PDBsum" id="5NO4"/>
<dbReference type="PDBsum" id="5NP6"/>
<dbReference type="PDBsum" id="5NWY"/>
<dbReference type="PDBsum" id="5O2R"/>
<dbReference type="PDBsum" id="5U4I"/>
<dbReference type="PDBsum" id="5U9F"/>
<dbReference type="PDBsum" id="5U9G"/>
<dbReference type="PDBsum" id="5UYK"/>
<dbReference type="PDBsum" id="5UYL"/>
<dbReference type="PDBsum" id="5UYM"/>
<dbReference type="PDBsum" id="5UYN"/>
<dbReference type="PDBsum" id="5UYP"/>
<dbReference type="PDBsum" id="5UYQ"/>
<dbReference type="PDBsum" id="5UZ4"/>
<dbReference type="PDBsum" id="5WDT"/>
<dbReference type="PDBsum" id="5WE4"/>
<dbReference type="PDBsum" id="5WE6"/>
<dbReference type="PDBsum" id="5WF0"/>
<dbReference type="PDBsum" id="5WFK"/>
<dbReference type="PDBsum" id="5WFS"/>
<dbReference type="PDBsum" id="6AWB"/>
<dbReference type="PDBsum" id="6AWC"/>
<dbReference type="PDBsum" id="6AWD"/>
<dbReference type="PDBsum" id="6BU8"/>
<dbReference type="PDBsum" id="6BY1"/>
<dbReference type="PDBsum" id="6C4I"/>
<dbReference type="PDBsum" id="6DNC"/>
<dbReference type="PDBsum" id="6ENF"/>
<dbReference type="PDBsum" id="6ENJ"/>
<dbReference type="PDBsum" id="6ENU"/>
<dbReference type="PDBsum" id="6GWT"/>
<dbReference type="PDBsum" id="6GXM"/>
<dbReference type="PDBsum" id="6GXN"/>
<dbReference type="PDBsum" id="6GXO"/>
<dbReference type="PDBsum" id="6GXP"/>
<dbReference type="PDBsum" id="6H4N"/>
<dbReference type="PDBsum" id="6H58"/>
<dbReference type="PDBsum" id="6HRM"/>
<dbReference type="PDBsum" id="6I7V"/>
<dbReference type="PDBsum" id="6O7K"/>
<dbReference type="PDBsum" id="6O9J"/>
<dbReference type="PDBsum" id="6O9K"/>
<dbReference type="PDBsum" id="6OFX"/>
<dbReference type="PDBsum" id="6OG7"/>
<dbReference type="PDBsum" id="6OGF"/>
<dbReference type="PDBsum" id="6OGG"/>
<dbReference type="PDBsum" id="6OGI"/>
<dbReference type="PDBsum" id="6OM6"/>
<dbReference type="PDBsum" id="6ORE"/>
<dbReference type="PDBsum" id="6ORL"/>
<dbReference type="PDBsum" id="6OSK"/>
<dbReference type="PDBsum" id="6OSQ"/>
<dbReference type="PDBsum" id="6OST"/>
<dbReference type="PDBsum" id="6OT3"/>
<dbReference type="PDBsum" id="6OUO"/>
<dbReference type="PDBsum" id="6Q97"/>
<dbReference type="PDBsum" id="6Q98"/>
<dbReference type="PDBsum" id="6Q9A"/>
<dbReference type="PDBsum" id="6SZS"/>
<dbReference type="PDBsum" id="6TBV"/>
<dbReference type="PDBsum" id="6TC3"/>
<dbReference type="PDBsum" id="6VU3"/>
<dbReference type="PDBsum" id="6VWL"/>
<dbReference type="PDBsum" id="6VWM"/>
<dbReference type="PDBsum" id="6VWN"/>
<dbReference type="PDBsum" id="6VYQ"/>
<dbReference type="PDBsum" id="6VYR"/>
<dbReference type="PDBsum" id="6VYS"/>
<dbReference type="PDBsum" id="6VYT"/>
<dbReference type="PDBsum" id="6VYU"/>
<dbReference type="PDBsum" id="6VYW"/>
<dbReference type="PDBsum" id="6VYX"/>
<dbReference type="PDBsum" id="6VYY"/>
<dbReference type="PDBsum" id="6VYZ"/>
<dbReference type="PDBsum" id="6VZ2"/>
<dbReference type="PDBsum" id="6VZ3"/>
<dbReference type="PDBsum" id="6VZ5"/>
<dbReference type="PDBsum" id="6VZ7"/>
<dbReference type="PDBsum" id="6VZJ"/>
<dbReference type="PDBsum" id="6W6K"/>
<dbReference type="PDBsum" id="6W77"/>
<dbReference type="PDBsum" id="6W7M"/>
<dbReference type="PDBsum" id="6W7N"/>
<dbReference type="PDBsum" id="6W7W"/>
<dbReference type="PDBsum" id="6WD0"/>
<dbReference type="PDBsum" id="6WD1"/>
<dbReference type="PDBsum" id="6WD2"/>
<dbReference type="PDBsum" id="6WD3"/>
<dbReference type="PDBsum" id="6WD4"/>
<dbReference type="PDBsum" id="6WD5"/>
<dbReference type="PDBsum" id="6WD6"/>
<dbReference type="PDBsum" id="6WD7"/>
<dbReference type="PDBsum" id="6WD8"/>
<dbReference type="PDBsum" id="6WD9"/>
<dbReference type="PDBsum" id="6WDA"/>
<dbReference type="PDBsum" id="6WDB"/>
<dbReference type="PDBsum" id="6WDC"/>
<dbReference type="PDBsum" id="6WDD"/>
<dbReference type="PDBsum" id="6WDE"/>
<dbReference type="PDBsum" id="6WDF"/>
<dbReference type="PDBsum" id="6WDG"/>
<dbReference type="PDBsum" id="6WDH"/>
<dbReference type="PDBsum" id="6WDI"/>
<dbReference type="PDBsum" id="6WDJ"/>
<dbReference type="PDBsum" id="6WDK"/>
<dbReference type="PDBsum" id="6WDL"/>
<dbReference type="PDBsum" id="6WDM"/>
<dbReference type="PDBsum" id="6WNV"/>
<dbReference type="PDBsum" id="6WNW"/>
<dbReference type="PDBsum" id="6X6T"/>
<dbReference type="PDBsum" id="6X7F"/>
<dbReference type="PDBsum" id="6X7K"/>
<dbReference type="PDBsum" id="6X9Q"/>
<dbReference type="PDBsum" id="6XDQ"/>
<dbReference type="PDBsum" id="6XDR"/>
<dbReference type="PDBsum" id="6XE0"/>
<dbReference type="PDBsum" id="6XGF"/>
<dbReference type="PDBsum" id="6XII"/>
<dbReference type="PDBsum" id="6XIJ"/>
<dbReference type="PDBsum" id="6XZA"/>
<dbReference type="PDBsum" id="6XZB"/>
<dbReference type="PDBsum" id="6Y69"/>
<dbReference type="PDBsum" id="6ZTJ"/>
<dbReference type="PDBsum" id="6ZTL"/>
<dbReference type="PDBsum" id="6ZTM"/>
<dbReference type="PDBsum" id="6ZTN"/>
<dbReference type="PDBsum" id="6ZTO"/>
<dbReference type="PDBsum" id="6ZTP"/>
<dbReference type="PDBsum" id="6ZU1"/>
<dbReference type="PDBsum" id="7ABZ"/>
<dbReference type="PDBsum" id="7AC7"/>
<dbReference type="PDBsum" id="7ACJ"/>
<dbReference type="PDBsum" id="7ACR"/>
<dbReference type="PDBsum" id="7AFI"/>
<dbReference type="PDBsum" id="7AFL"/>
<dbReference type="PDBsum" id="7AFO"/>
<dbReference type="PDBsum" id="7B5K"/>
<dbReference type="PDBsum" id="7BOD"/>
<dbReference type="PDBsum" id="7BOE"/>
<dbReference type="PDBsum" id="7BOF"/>
<dbReference type="PDBsum" id="7BOG"/>
<dbReference type="PDBsum" id="7BOH"/>
<dbReference type="PDBsum" id="7BOI"/>
<dbReference type="PDBsum" id="7D6Z"/>
<dbReference type="PDBsum" id="7D80"/>
<dbReference type="PDBsum" id="7JSS"/>
<dbReference type="PDBsum" id="7JSW"/>
<dbReference type="PDBsum" id="7JSZ"/>
<dbReference type="PDBsum" id="7JT1"/>
<dbReference type="PDBsum" id="7JT2"/>
<dbReference type="PDBsum" id="7JT3"/>
<dbReference type="PDBsum" id="7K00"/>
<dbReference type="PDBsum" id="7K50"/>
<dbReference type="PDBsum" id="7K51"/>
<dbReference type="PDBsum" id="7K52"/>
<dbReference type="PDBsum" id="7K53"/>
<dbReference type="PDBsum" id="7K54"/>
<dbReference type="PDBsum" id="7K55"/>
<dbReference type="PDBsum" id="7LV0"/>
<dbReference type="PDBsum" id="7M5D"/>
<dbReference type="PDBsum" id="7N1P"/>
<dbReference type="PDBsum" id="7N2C"/>
<dbReference type="PDBsum" id="7N2U"/>
<dbReference type="PDBsum" id="7N2V"/>
<dbReference type="PDBsum" id="7N30"/>
<dbReference type="PDBsum" id="7N31"/>
<dbReference type="PDBsum" id="7NAR"/>
<dbReference type="PDBsum" id="7NAS"/>
<dbReference type="PDBsum" id="7NAT"/>
<dbReference type="PDBsum" id="7NAU"/>
<dbReference type="PDBsum" id="7NAV"/>
<dbReference type="PDBsum" id="7NAX"/>
<dbReference type="PDBsum" id="7NBU"/>
<dbReference type="PDBsum" id="7O19"/>
<dbReference type="PDBsum" id="7O1A"/>
<dbReference type="PDBsum" id="7O1C"/>
<dbReference type="PDBsum" id="7O5H"/>
<dbReference type="PDBsum" id="7OE0"/>
<dbReference type="PDBsum" id="7OE1"/>
<dbReference type="PDBsum" id="7OI0"/>
<dbReference type="PDBsum" id="7OIZ"/>
<dbReference type="PDBsum" id="7OJ0"/>
<dbReference type="PDBsum" id="7P3K"/>
<dbReference type="PDBsum" id="7PJU"/>
<dbReference type="PDBsum" id="7PJV"/>
<dbReference type="PDBsum" id="7PJY"/>
<dbReference type="PDBsum" id="7QG8"/>
<dbReference type="PDBsum" id="7QGH"/>
<dbReference type="PDBsum" id="7QGN"/>
<dbReference type="PDBsum" id="7QGR"/>
<dbReference type="PDBsum" id="7S1G"/>
<dbReference type="PDBsum" id="7S1H"/>
<dbReference type="PDBsum" id="7S1I"/>
<dbReference type="PDBsum" id="7S1J"/>
<dbReference type="PDBsum" id="7S1K"/>
<dbReference type="PDBsum" id="7SA4"/>
<dbReference type="PDBsum" id="7SS9"/>
<dbReference type="PDBsum" id="7SSD"/>
<dbReference type="PDBsum" id="7SSL"/>
<dbReference type="PDBsum" id="7SSN"/>
<dbReference type="PDBsum" id="7SSO"/>
<dbReference type="PDBsum" id="7SSW"/>
<dbReference type="PDBsum" id="7ST2"/>
<dbReference type="PDBsum" id="7ST6"/>
<dbReference type="PDBsum" id="7ST7"/>
<dbReference type="PDBsum" id="7TOS"/>
<dbReference type="PDBsum" id="7UG7"/>
<dbReference type="PDBsum" id="7UPH"/>
<dbReference type="PDBsum" id="7Y7C"/>
<dbReference type="PDBsum" id="7Y7D"/>
<dbReference type="PDBsum" id="7Y7E"/>
<dbReference type="PDBsum" id="7Y7F"/>
<dbReference type="PDBsum" id="7Y7G"/>
<dbReference type="PDBsum" id="7Y7H"/>
<dbReference type="PDBsum" id="7ZTA"/>
<dbReference type="PDBsum" id="8A3L"/>
<dbReference type="PDBsum" id="8AKN"/>
<dbReference type="PDBsum" id="8AM9"/>
<dbReference type="PDBsum" id="8AYE"/>
<dbReference type="PDBsum" id="8B0X"/>
<dbReference type="PDBsum" id="8B7Y"/>
<dbReference type="PDBsum" id="8BF7"/>
<dbReference type="PDBsum" id="8BGE"/>
<dbReference type="PDBsum" id="8BGH"/>
<dbReference type="PDBsum" id="8BH4"/>
<dbReference type="PDBsum" id="8BHJ"/>
<dbReference type="PDBsum" id="8BHL"/>
<dbReference type="PDBsum" id="8BHN"/>
<dbReference type="PDBsum" id="8BHP"/>
<dbReference type="PDBsum" id="8BIL"/>
<dbReference type="PDBsum" id="8BIM"/>
<dbReference type="PDBsum" id="8CAI"/>
<dbReference type="PDBsum" id="8CEP"/>
<dbReference type="PDBsum" id="8CGJ"/>
<dbReference type="PDBsum" id="8CGR"/>
<dbReference type="PDBsum" id="8CGU"/>
<dbReference type="PDBsum" id="8EIU"/>
<dbReference type="PDBsum" id="8EKC"/>
<dbReference type="PDBsum" id="8EMM"/>
<dbReference type="PDBsum" id="8EYQ"/>
<dbReference type="PDBsum" id="8EYT"/>
<dbReference type="PDBsum" id="8FIZ"/>
<dbReference type="PDBsum" id="8FTO"/>
<dbReference type="PDBsum" id="8FZD"/>
<dbReference type="PDBsum" id="8FZE"/>
<dbReference type="PDBsum" id="8FZF"/>
<dbReference type="PDBsum" id="8FZG"/>
<dbReference type="PDBsum" id="8FZH"/>
<dbReference type="PDBsum" id="8FZI"/>
<dbReference type="PDBsum" id="8FZJ"/>
<dbReference type="PDBsum" id="8G2U"/>
<dbReference type="PDBsum" id="8G31"/>
<dbReference type="PDBsum" id="8G34"/>
<dbReference type="PDBsum" id="8G38"/>
<dbReference type="PDBsum" id="8G6W"/>
<dbReference type="PDBsum" id="8G7P"/>
<dbReference type="PDBsum" id="8G7Q"/>
<dbReference type="PDBsum" id="8G7R"/>
<dbReference type="PDBsum" id="8G7S"/>
<dbReference type="PDBsum" id="8GHU"/>
<dbReference type="PDBsum" id="8HSP"/>
<dbReference type="PDBsum" id="8HTZ"/>
<dbReference type="PDBsum" id="8HU1"/>
<dbReference type="PDBsum" id="8IFB"/>
<dbReference type="PDBsum" id="8IFC"/>
<dbReference type="PDBsum" id="8JSG"/>
<dbReference type="PDBsum" id="8JSH"/>
<dbReference type="PDBsum" id="8K3O"/>
<dbReference type="PDBsum" id="8K4E"/>
<dbReference type="PDBsum" id="8P16"/>
<dbReference type="PDBsum" id="8P17"/>
<dbReference type="PDBsum" id="8P18"/>
<dbReference type="PDBsum" id="8PEG"/>
<dbReference type="PDBsum" id="8PHJ"/>
<dbReference type="PDBsum" id="8PKL"/>
<dbReference type="PDBsum" id="8PVA"/>
<dbReference type="PDBsum" id="8Q4F"/>
<dbReference type="PDBsum" id="8QBT"/>
<dbReference type="PDBsum" id="8QK7"/>
<dbReference type="PDBsum" id="8QOA"/>
<dbReference type="PDBsum" id="8R3V"/>
<dbReference type="PDBsum" id="8R6C"/>
<dbReference type="PDBsum" id="8R8M"/>
<dbReference type="PDBsum" id="8RCL"/>
<dbReference type="PDBsum" id="8RCM"/>
<dbReference type="PDBsum" id="8RCS"/>
<dbReference type="PDBsum" id="8RCT"/>
<dbReference type="PDBsum" id="8SYL"/>
<dbReference type="PDBsum" id="8T5D"/>
<dbReference type="PDBsum" id="8T5H"/>
<dbReference type="PDBsum" id="8UPO"/>
<dbReference type="PDBsum" id="8UPR"/>
<dbReference type="PDBsum" id="8UQL"/>
<dbReference type="PDBsum" id="8UQM"/>
<dbReference type="PDBsum" id="8UQP"/>
<dbReference type="PDBsum" id="8UR0"/>
<dbReference type="PDBsum" id="8URH"/>
<dbReference type="PDBsum" id="8URI"/>
<dbReference type="PDBsum" id="8URX"/>
<dbReference type="PDBsum" id="8URY"/>
<dbReference type="PDBsum" id="8VS9"/>
<dbReference type="PDBsum" id="8VSA"/>
<dbReference type="PDBsum" id="8YUO"/>
<dbReference type="PDBsum" id="8YUP"/>
<dbReference type="PDBsum" id="8YUQ"/>
<dbReference type="PDBsum" id="8YUR"/>
<dbReference type="PDBsum" id="8YUS"/>
<dbReference type="PDBsum" id="9DUK"/>
<dbReference type="PDBsum" id="9DUL"/>
<dbReference type="PDBsum" id="9FBV"/>
<dbReference type="PDBsum" id="9GFT"/>
<dbReference type="PDBsum" id="9GGR"/>
<dbReference type="PDBsum" id="9GUP"/>
<dbReference type="PDBsum" id="9GUQ"/>
<dbReference type="PDBsum" id="9GUS"/>
<dbReference type="PDBsum" id="9GUT"/>
<dbReference type="PDBsum" id="9GUU"/>
<dbReference type="PDBsum" id="9GUV"/>
<dbReference type="PDBsum" id="9GUW"/>
<dbReference type="PDBsum" id="9GUX"/>
<dbReference type="PDBsum" id="9MOR"/>
<dbReference type="PDBsum" id="9MQ4"/>
<dbReference type="EMDB" id="EMD-0076"/>
<dbReference type="EMDB" id="EMD-0080"/>
<dbReference type="EMDB" id="EMD-0081"/>
<dbReference type="EMDB" id="EMD-0082"/>
<dbReference type="EMDB" id="EMD-0083"/>
<dbReference type="EMDB" id="EMD-0137"/>
<dbReference type="EMDB" id="EMD-0139"/>
<dbReference type="EMDB" id="EMD-0261"/>
<dbReference type="EMDB" id="EMD-10353"/>
<dbReference type="EMDB" id="EMD-10453"/>
<dbReference type="EMDB" id="EMD-10458"/>
<dbReference type="EMDB" id="EMD-10656"/>
<dbReference type="EMDB" id="EMD-10657"/>
<dbReference type="EMDB" id="EMD-10705"/>
<dbReference type="EMDB" id="EMD-11419"/>
<dbReference type="EMDB" id="EMD-11710"/>
<dbReference type="EMDB" id="EMD-11713"/>
<dbReference type="EMDB" id="EMD-11717"/>
<dbReference type="EMDB" id="EMD-11718"/>
<dbReference type="EMDB" id="EMD-12035"/>
<dbReference type="EMDB" id="EMD-12239"/>
<dbReference type="EMDB" id="EMD-12240"/>
<dbReference type="EMDB" id="EMD-12241"/>
<dbReference type="EMDB" id="EMD-12242"/>
<dbReference type="EMDB" id="EMD-12243"/>
<dbReference type="EMDB" id="EMD-12244"/>
<dbReference type="EMDB" id="EMD-12245"/>
<dbReference type="EMDB" id="EMD-12246"/>
<dbReference type="EMDB" id="EMD-12247"/>
<dbReference type="EMDB" id="EMD-12248"/>
<dbReference type="EMDB" id="EMD-12249"/>
<dbReference type="EMDB" id="EMD-12261"/>
<dbReference type="EMDB" id="EMD-12693"/>
<dbReference type="EMDB" id="EMD-12694"/>
<dbReference type="EMDB" id="EMD-12695"/>
<dbReference type="EMDB" id="EMD-12936"/>
<dbReference type="EMDB" id="EMD-12937"/>
<dbReference type="EMDB" id="EMD-13180"/>
<dbReference type="EMDB" id="EMD-13461"/>
<dbReference type="EMDB" id="EMD-13464"/>
<dbReference type="EMDB" id="EMD-13952"/>
<dbReference type="EMDB" id="EMD-13955"/>
<dbReference type="EMDB" id="EMD-14956"/>
<dbReference type="EMDB" id="EMD-15116"/>
<dbReference type="EMDB" id="EMD-15712"/>
<dbReference type="EMDB" id="EMD-15793"/>
<dbReference type="EMDB" id="EMD-15905"/>
<dbReference type="EMDB" id="EMD-16015"/>
<dbReference type="EMDB" id="EMD-16029"/>
<dbReference type="EMDB" id="EMD-16031"/>
<dbReference type="EMDB" id="EMD-16047"/>
<dbReference type="EMDB" id="EMD-16057"/>
<dbReference type="EMDB" id="EMD-16059"/>
<dbReference type="EMDB" id="EMD-16062"/>
<dbReference type="EMDB" id="EMD-16065"/>
<dbReference type="EMDB" id="EMD-16081"/>
<dbReference type="EMDB" id="EMD-16082"/>
<dbReference type="EMDB" id="EMD-16526"/>
<dbReference type="EMDB" id="EMD-16612"/>
<dbReference type="EMDB" id="EMD-16645"/>
<dbReference type="EMDB" id="EMD-16650"/>
<dbReference type="EMDB" id="EMD-16651"/>
<dbReference type="EMDB" id="EMD-17346"/>
<dbReference type="EMDB" id="EMD-17347"/>
<dbReference type="EMDB" id="EMD-17348"/>
<dbReference type="EMDB" id="EMD-17631"/>
<dbReference type="EMDB" id="EMD-17667"/>
<dbReference type="EMDB" id="EMD-17743"/>
<dbReference type="EMDB" id="EMD-17959"/>
<dbReference type="EMDB" id="EMD-18145"/>
<dbReference type="EMDB" id="EMD-18320"/>
<dbReference type="EMDB" id="EMD-18458"/>
<dbReference type="EMDB" id="EMD-18534"/>
<dbReference type="EMDB" id="EMD-18875"/>
<dbReference type="EMDB" id="EMD-18950"/>
<dbReference type="EMDB" id="EMD-19004"/>
<dbReference type="EMDB" id="EMD-19054"/>
<dbReference type="EMDB" id="EMD-19055"/>
<dbReference type="EMDB" id="EMD-19058"/>
<dbReference type="EMDB" id="EMD-19059"/>
<dbReference type="EMDB" id="EMD-20048"/>
<dbReference type="EMDB" id="EMD-20052"/>
<dbReference type="EMDB" id="EMD-21420"/>
<dbReference type="EMDB" id="EMD-21421"/>
<dbReference type="EMDB" id="EMD-21422"/>
<dbReference type="EMDB" id="EMD-21558"/>
<dbReference type="EMDB" id="EMD-21569"/>
<dbReference type="EMDB" id="EMD-21571"/>
<dbReference type="EMDB" id="EMD-21572"/>
<dbReference type="EMDB" id="EMD-21573"/>
<dbReference type="EMDB" id="EMD-21625"/>
<dbReference type="EMDB" id="EMD-21630"/>
<dbReference type="EMDB" id="EMD-21631"/>
<dbReference type="EMDB" id="EMD-21632"/>
<dbReference type="EMDB" id="EMD-21633"/>
<dbReference type="EMDB" id="EMD-21634"/>
<dbReference type="EMDB" id="EMD-21635"/>
<dbReference type="EMDB" id="EMD-21636"/>
<dbReference type="EMDB" id="EMD-21637"/>
<dbReference type="EMDB" id="EMD-21638"/>
<dbReference type="EMDB" id="EMD-21639"/>
<dbReference type="EMDB" id="EMD-21640"/>
<dbReference type="EMDB" id="EMD-21641"/>
<dbReference type="EMDB" id="EMD-21857"/>
<dbReference type="EMDB" id="EMD-21858"/>
<dbReference type="EMDB" id="EMD-22143"/>
<dbReference type="EMDB" id="EMD-22459"/>
<dbReference type="EMDB" id="EMD-22461"/>
<dbReference type="EMDB" id="EMD-22464"/>
<dbReference type="EMDB" id="EMD-22466"/>
<dbReference type="EMDB" id="EMD-22469"/>
<dbReference type="EMDB" id="EMD-22472"/>
<dbReference type="EMDB" id="EMD-22669"/>
<dbReference type="EMDB" id="EMD-22670"/>
<dbReference type="EMDB" id="EMD-22671"/>
<dbReference type="EMDB" id="EMD-22672"/>
<dbReference type="EMDB" id="EMD-22673"/>
<dbReference type="EMDB" id="EMD-22674"/>
<dbReference type="EMDB" id="EMD-23528"/>
<dbReference type="EMDB" id="EMD-24120"/>
<dbReference type="EMDB" id="EMD-24132"/>
<dbReference type="EMDB" id="EMD-24133"/>
<dbReference type="EMDB" id="EMD-24134"/>
<dbReference type="EMDB" id="EMD-24135"/>
<dbReference type="EMDB" id="EMD-24136"/>
<dbReference type="EMDB" id="EMD-24803"/>
<dbReference type="EMDB" id="EMD-25405"/>
<dbReference type="EMDB" id="EMD-25407"/>
<dbReference type="EMDB" id="EMD-25409"/>
<dbReference type="EMDB" id="EMD-25410"/>
<dbReference type="EMDB" id="EMD-25411"/>
<dbReference type="EMDB" id="EMD-25415"/>
<dbReference type="EMDB" id="EMD-25418"/>
<dbReference type="EMDB" id="EMD-25420"/>
<dbReference type="EMDB" id="EMD-25421"/>
<dbReference type="EMDB" id="EMD-30598"/>
<dbReference type="EMDB" id="EMD-30611"/>
<dbReference type="EMDB" id="EMD-33660"/>
<dbReference type="EMDB" id="EMD-33661"/>
<dbReference type="EMDB" id="EMD-33662"/>
<dbReference type="EMDB" id="EMD-33663"/>
<dbReference type="EMDB" id="EMD-33664"/>
<dbReference type="EMDB" id="EMD-33665"/>
<dbReference type="EMDB" id="EMD-3489"/>
<dbReference type="EMDB" id="EMD-3490"/>
<dbReference type="EMDB" id="EMD-3492"/>
<dbReference type="EMDB" id="EMD-3493"/>
<dbReference type="EMDB" id="EMD-3494"/>
<dbReference type="EMDB" id="EMD-3495"/>
<dbReference type="EMDB" id="EMD-35001"/>
<dbReference type="EMDB" id="EMD-35020"/>
<dbReference type="EMDB" id="EMD-35022"/>
<dbReference type="EMDB" id="EMD-3508"/>
<dbReference type="EMDB" id="EMD-35411"/>
<dbReference type="EMDB" id="EMD-35412"/>
<dbReference type="EMDB" id="EMD-3580"/>
<dbReference type="EMDB" id="EMD-3661"/>
<dbReference type="EMDB" id="EMD-36619"/>
<dbReference type="EMDB" id="EMD-3662"/>
<dbReference type="EMDB" id="EMD-36620"/>
<dbReference type="EMDB" id="EMD-3663"/>
<dbReference type="EMDB" id="EMD-36854"/>
<dbReference type="EMDB" id="EMD-36883"/>
<dbReference type="EMDB" id="EMD-3713"/>
<dbReference type="EMDB" id="EMD-3730"/>
<dbReference type="EMDB" id="EMD-3898"/>
<dbReference type="EMDB" id="EMD-3899"/>
<dbReference type="EMDB" id="EMD-3903"/>
<dbReference type="EMDB" id="EMD-39577"/>
<dbReference type="EMDB" id="EMD-39578"/>
<dbReference type="EMDB" id="EMD-39579"/>
<dbReference type="EMDB" id="EMD-39580"/>
<dbReference type="EMDB" id="EMD-39581"/>
<dbReference type="EMDB" id="EMD-4001"/>
<dbReference type="EMDB" id="EMD-4121"/>
<dbReference type="EMDB" id="EMD-4122"/>
<dbReference type="EMDB" id="EMD-4123"/>
<dbReference type="EMDB" id="EMD-4124"/>
<dbReference type="EMDB" id="EMD-4125"/>
<dbReference type="EMDB" id="EMD-4476"/>
<dbReference type="EMDB" id="EMD-4477"/>
<dbReference type="EMDB" id="EMD-4478"/>
<dbReference type="EMDB" id="EMD-50296"/>
<dbReference type="EMDB" id="EMD-51318"/>
<dbReference type="EMDB" id="EMD-51340"/>
<dbReference type="EMDB" id="EMD-51615"/>
<dbReference type="EMDB" id="EMD-51616"/>
<dbReference type="EMDB" id="EMD-51618"/>
<dbReference type="EMDB" id="EMD-51619"/>
<dbReference type="EMDB" id="EMD-51620"/>
<dbReference type="EMDB" id="EMD-51621"/>
<dbReference type="EMDB" id="EMD-51622"/>
<dbReference type="EMDB" id="EMD-51623"/>
<dbReference type="EMDB" id="EMD-6667"/>
<dbReference type="EMDB" id="EMD-7289"/>
<dbReference type="EMDB" id="EMD-7341"/>
<dbReference type="EMDB" id="EMD-8107"/>
<dbReference type="EMDB" id="EMD-8175"/>
<dbReference type="EMDB" id="EMD-8176"/>
<dbReference type="EMDB" id="EMD-8237"/>
<dbReference type="EMDB" id="EMD-8238"/>
<dbReference type="EMDB" id="EMD-8279"/>
<dbReference type="EMDB" id="EMD-8280"/>
<dbReference type="EMDB" id="EMD-8281"/>
<dbReference type="EMDB" id="EMD-8282"/>
<dbReference type="EMDB" id="EMD-8505"/>
<dbReference type="EMDB" id="EMD-8615"/>
<dbReference type="EMDB" id="EMD-8616"/>
<dbReference type="EMDB" id="EMD-8617"/>
<dbReference type="EMDB" id="EMD-8618"/>
<dbReference type="EMDB" id="EMD-8619"/>
<dbReference type="EMDB" id="EMD-8620"/>
<dbReference type="EMDB" id="EMD-8813"/>
<dbReference type="EMDB" id="EMD-8814"/>
<dbReference type="EMDB" id="EMD-8815"/>
<dbReference type="EMDB" id="EMD-8828"/>
<dbReference type="SMR" id="P0A7W7"/>
<dbReference type="BioGRID" id="4263402">
    <property type="interactions" value="4"/>
</dbReference>
<dbReference type="BioGRID" id="852114">
    <property type="interactions" value="18"/>
</dbReference>
<dbReference type="ComplexPortal" id="CPX-3802">
    <property type="entry name" value="30S small ribosomal subunit"/>
</dbReference>
<dbReference type="DIP" id="DIP-47901N"/>
<dbReference type="FunCoup" id="P0A7W7">
    <property type="interactions" value="856"/>
</dbReference>
<dbReference type="IntAct" id="P0A7W7">
    <property type="interactions" value="59"/>
</dbReference>
<dbReference type="STRING" id="511145.b3306"/>
<dbReference type="DrugBank" id="DB09093">
    <property type="generic name" value="Chlortetracycline"/>
</dbReference>
<dbReference type="DrugBank" id="DB12455">
    <property type="generic name" value="Omadacycline"/>
</dbReference>
<dbReference type="DrugBank" id="DB00759">
    <property type="generic name" value="Tetracycline"/>
</dbReference>
<dbReference type="MoonProt" id="P0A7W7"/>
<dbReference type="jPOST" id="P0A7W7"/>
<dbReference type="PaxDb" id="511145-b3306"/>
<dbReference type="EnsemblBacteria" id="AAC76331">
    <property type="protein sequence ID" value="AAC76331"/>
    <property type="gene ID" value="b3306"/>
</dbReference>
<dbReference type="GeneID" id="93778681"/>
<dbReference type="GeneID" id="947802"/>
<dbReference type="KEGG" id="ecj:JW3268"/>
<dbReference type="KEGG" id="eco:b3306"/>
<dbReference type="KEGG" id="ecoc:C3026_17970"/>
<dbReference type="PATRIC" id="fig|1411691.4.peg.3425"/>
<dbReference type="EchoBASE" id="EB0900"/>
<dbReference type="eggNOG" id="COG0096">
    <property type="taxonomic scope" value="Bacteria"/>
</dbReference>
<dbReference type="HOGENOM" id="CLU_098428_0_0_6"/>
<dbReference type="InParanoid" id="P0A7W7"/>
<dbReference type="OMA" id="NSAYHDT"/>
<dbReference type="OrthoDB" id="9802617at2"/>
<dbReference type="PhylomeDB" id="P0A7W7"/>
<dbReference type="BioCyc" id="EcoCyc:EG10907-MONOMER"/>
<dbReference type="BioCyc" id="MetaCyc:EG10907-MONOMER"/>
<dbReference type="EvolutionaryTrace" id="P0A7W7"/>
<dbReference type="PRO" id="PR:P0A7W7"/>
<dbReference type="Proteomes" id="UP000000625">
    <property type="component" value="Chromosome"/>
</dbReference>
<dbReference type="GO" id="GO:0005737">
    <property type="term" value="C:cytoplasm"/>
    <property type="evidence" value="ECO:0000314"/>
    <property type="project" value="ComplexPortal"/>
</dbReference>
<dbReference type="GO" id="GO:0005829">
    <property type="term" value="C:cytosol"/>
    <property type="evidence" value="ECO:0000314"/>
    <property type="project" value="EcoCyc"/>
</dbReference>
<dbReference type="GO" id="GO:0022627">
    <property type="term" value="C:cytosolic small ribosomal subunit"/>
    <property type="evidence" value="ECO:0000314"/>
    <property type="project" value="CAFA"/>
</dbReference>
<dbReference type="GO" id="GO:0019843">
    <property type="term" value="F:rRNA binding"/>
    <property type="evidence" value="ECO:0000314"/>
    <property type="project" value="EcoliWiki"/>
</dbReference>
<dbReference type="GO" id="GO:0003735">
    <property type="term" value="F:structural constituent of ribosome"/>
    <property type="evidence" value="ECO:0000314"/>
    <property type="project" value="CAFA"/>
</dbReference>
<dbReference type="GO" id="GO:0002181">
    <property type="term" value="P:cytoplasmic translation"/>
    <property type="evidence" value="ECO:0000303"/>
    <property type="project" value="ComplexPortal"/>
</dbReference>
<dbReference type="GO" id="GO:0043488">
    <property type="term" value="P:regulation of mRNA stability"/>
    <property type="evidence" value="ECO:0000315"/>
    <property type="project" value="EcoliWiki"/>
</dbReference>
<dbReference type="GO" id="GO:0006417">
    <property type="term" value="P:regulation of translation"/>
    <property type="evidence" value="ECO:0007669"/>
    <property type="project" value="UniProtKB-KW"/>
</dbReference>
<dbReference type="GO" id="GO:0000028">
    <property type="term" value="P:ribosomal small subunit assembly"/>
    <property type="evidence" value="ECO:0000314"/>
    <property type="project" value="CAFA"/>
</dbReference>
<dbReference type="FunFam" id="3.30.1370.30:FF:000003">
    <property type="entry name" value="30S ribosomal protein S8"/>
    <property type="match status" value="1"/>
</dbReference>
<dbReference type="FunFam" id="3.30.1490.10:FF:000001">
    <property type="entry name" value="30S ribosomal protein S8"/>
    <property type="match status" value="1"/>
</dbReference>
<dbReference type="Gene3D" id="3.30.1370.30">
    <property type="match status" value="1"/>
</dbReference>
<dbReference type="Gene3D" id="3.30.1490.10">
    <property type="match status" value="1"/>
</dbReference>
<dbReference type="HAMAP" id="MF_01302_B">
    <property type="entry name" value="Ribosomal_uS8_B"/>
    <property type="match status" value="1"/>
</dbReference>
<dbReference type="InterPro" id="IPR000630">
    <property type="entry name" value="Ribosomal_uS8"/>
</dbReference>
<dbReference type="InterPro" id="IPR047863">
    <property type="entry name" value="Ribosomal_uS8_CS"/>
</dbReference>
<dbReference type="InterPro" id="IPR035987">
    <property type="entry name" value="Ribosomal_uS8_sf"/>
</dbReference>
<dbReference type="NCBIfam" id="NF001109">
    <property type="entry name" value="PRK00136.1"/>
    <property type="match status" value="1"/>
</dbReference>
<dbReference type="PANTHER" id="PTHR11758">
    <property type="entry name" value="40S RIBOSOMAL PROTEIN S15A"/>
    <property type="match status" value="1"/>
</dbReference>
<dbReference type="Pfam" id="PF00410">
    <property type="entry name" value="Ribosomal_S8"/>
    <property type="match status" value="1"/>
</dbReference>
<dbReference type="SUPFAM" id="SSF56047">
    <property type="entry name" value="Ribosomal protein S8"/>
    <property type="match status" value="1"/>
</dbReference>
<dbReference type="PROSITE" id="PS00053">
    <property type="entry name" value="RIBOSOMAL_S8"/>
    <property type="match status" value="1"/>
</dbReference>
<organism>
    <name type="scientific">Escherichia coli (strain K12)</name>
    <dbReference type="NCBI Taxonomy" id="83333"/>
    <lineage>
        <taxon>Bacteria</taxon>
        <taxon>Pseudomonadati</taxon>
        <taxon>Pseudomonadota</taxon>
        <taxon>Gammaproteobacteria</taxon>
        <taxon>Enterobacterales</taxon>
        <taxon>Enterobacteriaceae</taxon>
        <taxon>Escherichia</taxon>
    </lineage>
</organism>
<proteinExistence type="evidence at protein level"/>
<protein>
    <recommendedName>
        <fullName evidence="13">Small ribosomal subunit protein uS8</fullName>
    </recommendedName>
    <alternativeName>
        <fullName>30S ribosomal protein S8</fullName>
    </alternativeName>
</protein>